<gene>
    <name type="primary">KIT</name>
    <name type="synonym">SCFR</name>
</gene>
<dbReference type="EC" id="2.7.10.1"/>
<dbReference type="EMBL" id="X06182">
    <property type="protein sequence ID" value="CAA29548.1"/>
    <property type="molecule type" value="mRNA"/>
</dbReference>
<dbReference type="EMBL" id="X69301">
    <property type="protein sequence ID" value="CAA49159.1"/>
    <property type="molecule type" value="Genomic_DNA"/>
</dbReference>
<dbReference type="EMBL" id="X69302">
    <property type="protein sequence ID" value="CAA49159.1"/>
    <property type="status" value="JOINED"/>
    <property type="molecule type" value="Genomic_DNA"/>
</dbReference>
<dbReference type="EMBL" id="X69303">
    <property type="protein sequence ID" value="CAA49159.1"/>
    <property type="status" value="JOINED"/>
    <property type="molecule type" value="Genomic_DNA"/>
</dbReference>
<dbReference type="EMBL" id="X69304">
    <property type="protein sequence ID" value="CAA49159.1"/>
    <property type="status" value="JOINED"/>
    <property type="molecule type" value="Genomic_DNA"/>
</dbReference>
<dbReference type="EMBL" id="X69305">
    <property type="protein sequence ID" value="CAA49159.1"/>
    <property type="status" value="JOINED"/>
    <property type="molecule type" value="Genomic_DNA"/>
</dbReference>
<dbReference type="EMBL" id="X69306">
    <property type="protein sequence ID" value="CAA49159.1"/>
    <property type="status" value="JOINED"/>
    <property type="molecule type" value="Genomic_DNA"/>
</dbReference>
<dbReference type="EMBL" id="X69307">
    <property type="protein sequence ID" value="CAA49159.1"/>
    <property type="status" value="JOINED"/>
    <property type="molecule type" value="Genomic_DNA"/>
</dbReference>
<dbReference type="EMBL" id="X69308">
    <property type="protein sequence ID" value="CAA49159.1"/>
    <property type="status" value="JOINED"/>
    <property type="molecule type" value="Genomic_DNA"/>
</dbReference>
<dbReference type="EMBL" id="X69309">
    <property type="protein sequence ID" value="CAA49159.1"/>
    <property type="status" value="JOINED"/>
    <property type="molecule type" value="Genomic_DNA"/>
</dbReference>
<dbReference type="EMBL" id="X69310">
    <property type="protein sequence ID" value="CAA49159.1"/>
    <property type="status" value="JOINED"/>
    <property type="molecule type" value="Genomic_DNA"/>
</dbReference>
<dbReference type="EMBL" id="X69311">
    <property type="protein sequence ID" value="CAA49159.1"/>
    <property type="status" value="JOINED"/>
    <property type="molecule type" value="Genomic_DNA"/>
</dbReference>
<dbReference type="EMBL" id="X69312">
    <property type="protein sequence ID" value="CAA49159.1"/>
    <property type="status" value="JOINED"/>
    <property type="molecule type" value="Genomic_DNA"/>
</dbReference>
<dbReference type="EMBL" id="X69313">
    <property type="protein sequence ID" value="CAA49159.1"/>
    <property type="status" value="JOINED"/>
    <property type="molecule type" value="Genomic_DNA"/>
</dbReference>
<dbReference type="EMBL" id="X69314">
    <property type="protein sequence ID" value="CAA49159.1"/>
    <property type="status" value="JOINED"/>
    <property type="molecule type" value="Genomic_DNA"/>
</dbReference>
<dbReference type="EMBL" id="X69315">
    <property type="protein sequence ID" value="CAA49159.1"/>
    <property type="status" value="JOINED"/>
    <property type="molecule type" value="Genomic_DNA"/>
</dbReference>
<dbReference type="EMBL" id="X69316">
    <property type="protein sequence ID" value="CAA49159.1"/>
    <property type="status" value="JOINED"/>
    <property type="molecule type" value="Genomic_DNA"/>
</dbReference>
<dbReference type="EMBL" id="U63834">
    <property type="protein sequence ID" value="AAC50968.1"/>
    <property type="molecule type" value="Genomic_DNA"/>
</dbReference>
<dbReference type="EMBL" id="U63834">
    <property type="protein sequence ID" value="AAC50969.1"/>
    <property type="molecule type" value="Genomic_DNA"/>
</dbReference>
<dbReference type="EMBL" id="GU983671">
    <property type="protein sequence ID" value="ADF36702.1"/>
    <property type="molecule type" value="mRNA"/>
</dbReference>
<dbReference type="EMBL" id="HM015525">
    <property type="protein sequence ID" value="ADF50068.1"/>
    <property type="molecule type" value="mRNA"/>
</dbReference>
<dbReference type="EMBL" id="HM015526">
    <property type="protein sequence ID" value="ADF50069.1"/>
    <property type="molecule type" value="mRNA"/>
</dbReference>
<dbReference type="EMBL" id="AK304031">
    <property type="protein sequence ID" value="BAG64945.1"/>
    <property type="molecule type" value="mRNA"/>
</dbReference>
<dbReference type="EMBL" id="AC006552">
    <property type="status" value="NOT_ANNOTATED_CDS"/>
    <property type="molecule type" value="Genomic_DNA"/>
</dbReference>
<dbReference type="EMBL" id="AC092545">
    <property type="status" value="NOT_ANNOTATED_CDS"/>
    <property type="molecule type" value="Genomic_DNA"/>
</dbReference>
<dbReference type="EMBL" id="BC071593">
    <property type="protein sequence ID" value="AAH71593.1"/>
    <property type="molecule type" value="mRNA"/>
</dbReference>
<dbReference type="EMBL" id="EU826594">
    <property type="protein sequence ID" value="ACF47630.1"/>
    <property type="status" value="ALT_SEQ"/>
    <property type="molecule type" value="mRNA"/>
</dbReference>
<dbReference type="EMBL" id="S67773">
    <property type="protein sequence ID" value="AAB29529.1"/>
    <property type="molecule type" value="Genomic_DNA"/>
</dbReference>
<dbReference type="CCDS" id="CCDS3496.1">
    <molecule id="P10721-1"/>
</dbReference>
<dbReference type="CCDS" id="CCDS47058.1">
    <molecule id="P10721-2"/>
</dbReference>
<dbReference type="PIR" id="S01426">
    <property type="entry name" value="TVHUKT"/>
</dbReference>
<dbReference type="RefSeq" id="NP_000213.1">
    <molecule id="P10721-1"/>
    <property type="nucleotide sequence ID" value="NM_000222.3"/>
</dbReference>
<dbReference type="RefSeq" id="NP_001087241.1">
    <molecule id="P10721-2"/>
    <property type="nucleotide sequence ID" value="NM_001093772.2"/>
</dbReference>
<dbReference type="PDB" id="1PKG">
    <property type="method" value="X-ray"/>
    <property type="resolution" value="2.90 A"/>
    <property type="chains" value="A/B=549-935"/>
</dbReference>
<dbReference type="PDB" id="1T45">
    <property type="method" value="X-ray"/>
    <property type="resolution" value="1.90 A"/>
    <property type="chains" value="A=547-693, A=754-935"/>
</dbReference>
<dbReference type="PDB" id="1T46">
    <property type="method" value="X-ray"/>
    <property type="resolution" value="1.60 A"/>
    <property type="chains" value="A=565-693, A=754-935"/>
</dbReference>
<dbReference type="PDB" id="2E9W">
    <property type="method" value="X-ray"/>
    <property type="resolution" value="3.50 A"/>
    <property type="chains" value="A/B=26-514"/>
</dbReference>
<dbReference type="PDB" id="2EC8">
    <property type="method" value="X-ray"/>
    <property type="resolution" value="3.00 A"/>
    <property type="chains" value="A=1-519"/>
</dbReference>
<dbReference type="PDB" id="2IUH">
    <property type="method" value="X-ray"/>
    <property type="resolution" value="2.00 A"/>
    <property type="chains" value="B=718-728"/>
</dbReference>
<dbReference type="PDB" id="2VIF">
    <property type="method" value="X-ray"/>
    <property type="resolution" value="1.45 A"/>
    <property type="chains" value="P=564-574"/>
</dbReference>
<dbReference type="PDB" id="3G0E">
    <property type="method" value="X-ray"/>
    <property type="resolution" value="1.60 A"/>
    <property type="chains" value="A=544-693, A=754-935"/>
</dbReference>
<dbReference type="PDB" id="3G0F">
    <property type="method" value="X-ray"/>
    <property type="resolution" value="2.60 A"/>
    <property type="chains" value="A/B=544-693, A/B=754-935"/>
</dbReference>
<dbReference type="PDB" id="4HVS">
    <property type="method" value="X-ray"/>
    <property type="resolution" value="1.90 A"/>
    <property type="chains" value="A=551-934"/>
</dbReference>
<dbReference type="PDB" id="4K94">
    <property type="method" value="X-ray"/>
    <property type="resolution" value="2.40 A"/>
    <property type="chains" value="C=308-518"/>
</dbReference>
<dbReference type="PDB" id="4K9E">
    <property type="method" value="X-ray"/>
    <property type="resolution" value="2.70 A"/>
    <property type="chains" value="C=308-518"/>
</dbReference>
<dbReference type="PDB" id="4PGZ">
    <property type="method" value="X-ray"/>
    <property type="resolution" value="2.40 A"/>
    <property type="chains" value="A/B/C=308-518"/>
</dbReference>
<dbReference type="PDB" id="4U0I">
    <property type="method" value="X-ray"/>
    <property type="resolution" value="2.00 A"/>
    <property type="chains" value="A=563-693, A=754-935"/>
</dbReference>
<dbReference type="PDB" id="6GQJ">
    <property type="method" value="X-ray"/>
    <property type="resolution" value="2.33 A"/>
    <property type="chains" value="A/B=551-933"/>
</dbReference>
<dbReference type="PDB" id="6GQK">
    <property type="method" value="X-ray"/>
    <property type="resolution" value="2.31 A"/>
    <property type="chains" value="A/B=551-687, A/B=771-934"/>
</dbReference>
<dbReference type="PDB" id="6GQL">
    <property type="method" value="X-ray"/>
    <property type="resolution" value="2.01 A"/>
    <property type="chains" value="A/B=551-934"/>
</dbReference>
<dbReference type="PDB" id="6GQM">
    <property type="method" value="X-ray"/>
    <property type="resolution" value="2.00 A"/>
    <property type="chains" value="A/B=551-934"/>
</dbReference>
<dbReference type="PDB" id="6HH1">
    <property type="method" value="X-ray"/>
    <property type="resolution" value="2.25 A"/>
    <property type="chains" value="A=565-702, A=802-929"/>
</dbReference>
<dbReference type="PDB" id="6ITT">
    <property type="method" value="X-ray"/>
    <property type="resolution" value="2.10 A"/>
    <property type="chains" value="A/B=547-693, A/B=754-935"/>
</dbReference>
<dbReference type="PDB" id="6ITV">
    <property type="method" value="X-ray"/>
    <property type="resolution" value="1.88 A"/>
    <property type="chains" value="A=547-693, A=754-935"/>
</dbReference>
<dbReference type="PDB" id="6KLA">
    <property type="method" value="X-ray"/>
    <property type="resolution" value="2.11 A"/>
    <property type="chains" value="A=547-693, A=754-935"/>
</dbReference>
<dbReference type="PDB" id="6MOB">
    <property type="method" value="X-ray"/>
    <property type="resolution" value="1.80 A"/>
    <property type="chains" value="A=566-693, A=754-935"/>
</dbReference>
<dbReference type="PDB" id="6XV9">
    <property type="method" value="X-ray"/>
    <property type="resolution" value="3.38 A"/>
    <property type="chains" value="A/B=551-687, A/B=766-934"/>
</dbReference>
<dbReference type="PDB" id="6XVA">
    <property type="method" value="X-ray"/>
    <property type="resolution" value="2.30 A"/>
    <property type="chains" value="A/B=551-687, A/B=766-934"/>
</dbReference>
<dbReference type="PDB" id="6XVB">
    <property type="method" value="X-ray"/>
    <property type="resolution" value="2.15 A"/>
    <property type="chains" value="A/B=551-687, A/B=766-934"/>
</dbReference>
<dbReference type="PDB" id="7KHG">
    <property type="method" value="X-ray"/>
    <property type="resolution" value="2.15 A"/>
    <property type="chains" value="A=545-934"/>
</dbReference>
<dbReference type="PDB" id="7KHJ">
    <property type="method" value="X-ray"/>
    <property type="resolution" value="2.80 A"/>
    <property type="chains" value="A/B=545-934"/>
</dbReference>
<dbReference type="PDB" id="7KHK">
    <property type="method" value="X-ray"/>
    <property type="resolution" value="2.34 A"/>
    <property type="chains" value="A/B=545-934"/>
</dbReference>
<dbReference type="PDB" id="7ZW8">
    <property type="method" value="X-ray"/>
    <property type="resolution" value="2.12 A"/>
    <property type="chains" value="A=551-935"/>
</dbReference>
<dbReference type="PDB" id="7ZY6">
    <property type="method" value="X-ray"/>
    <property type="resolution" value="3.09 A"/>
    <property type="chains" value="A=551-935"/>
</dbReference>
<dbReference type="PDB" id="8DFM">
    <property type="method" value="EM"/>
    <property type="resolution" value="3.45 A"/>
    <property type="chains" value="A/B=32-976"/>
</dbReference>
<dbReference type="PDB" id="8DFP">
    <property type="method" value="EM"/>
    <property type="resolution" value="3.17 A"/>
    <property type="chains" value="A/B=32-976"/>
</dbReference>
<dbReference type="PDB" id="8DFQ">
    <property type="method" value="EM"/>
    <property type="resolution" value="3.96 A"/>
    <property type="chains" value="A/B=32-976"/>
</dbReference>
<dbReference type="PDB" id="8PQ9">
    <property type="method" value="X-ray"/>
    <property type="resolution" value="1.70 A"/>
    <property type="chains" value="A/C=551-687, A/C=766-934"/>
</dbReference>
<dbReference type="PDB" id="8PQA">
    <property type="method" value="X-ray"/>
    <property type="resolution" value="1.65 A"/>
    <property type="chains" value="A/C=551-687, A/C=766-934"/>
</dbReference>
<dbReference type="PDB" id="8PQB">
    <property type="method" value="X-ray"/>
    <property type="resolution" value="1.87 A"/>
    <property type="chains" value="A=551-687, A=766-934"/>
</dbReference>
<dbReference type="PDB" id="8PQC">
    <property type="method" value="X-ray"/>
    <property type="resolution" value="1.77 A"/>
    <property type="chains" value="A/B=551-687, A/B=766-934"/>
</dbReference>
<dbReference type="PDB" id="8PQD">
    <property type="method" value="X-ray"/>
    <property type="resolution" value="1.50 A"/>
    <property type="chains" value="A/B=551-687, A/B=766-934"/>
</dbReference>
<dbReference type="PDB" id="8PQE">
    <property type="method" value="X-ray"/>
    <property type="resolution" value="2.00 A"/>
    <property type="chains" value="A/B=551-687, A/B=766-934"/>
</dbReference>
<dbReference type="PDB" id="8PQF">
    <property type="method" value="X-ray"/>
    <property type="resolution" value="1.90 A"/>
    <property type="chains" value="A/C=551-687, A/C=766-934"/>
</dbReference>
<dbReference type="PDB" id="8PQG">
    <property type="method" value="X-ray"/>
    <property type="resolution" value="2.40 A"/>
    <property type="chains" value="A/C=551-687, A/C=766-934"/>
</dbReference>
<dbReference type="PDBsum" id="1PKG"/>
<dbReference type="PDBsum" id="1T45"/>
<dbReference type="PDBsum" id="1T46"/>
<dbReference type="PDBsum" id="2E9W"/>
<dbReference type="PDBsum" id="2EC8"/>
<dbReference type="PDBsum" id="2IUH"/>
<dbReference type="PDBsum" id="2VIF"/>
<dbReference type="PDBsum" id="3G0E"/>
<dbReference type="PDBsum" id="3G0F"/>
<dbReference type="PDBsum" id="4HVS"/>
<dbReference type="PDBsum" id="4K94"/>
<dbReference type="PDBsum" id="4K9E"/>
<dbReference type="PDBsum" id="4PGZ"/>
<dbReference type="PDBsum" id="4U0I"/>
<dbReference type="PDBsum" id="6GQJ"/>
<dbReference type="PDBsum" id="6GQK"/>
<dbReference type="PDBsum" id="6GQL"/>
<dbReference type="PDBsum" id="6GQM"/>
<dbReference type="PDBsum" id="6HH1"/>
<dbReference type="PDBsum" id="6ITT"/>
<dbReference type="PDBsum" id="6ITV"/>
<dbReference type="PDBsum" id="6KLA"/>
<dbReference type="PDBsum" id="6MOB"/>
<dbReference type="PDBsum" id="6XV9"/>
<dbReference type="PDBsum" id="6XVA"/>
<dbReference type="PDBsum" id="6XVB"/>
<dbReference type="PDBsum" id="7KHG"/>
<dbReference type="PDBsum" id="7KHJ"/>
<dbReference type="PDBsum" id="7KHK"/>
<dbReference type="PDBsum" id="7ZW8"/>
<dbReference type="PDBsum" id="7ZY6"/>
<dbReference type="PDBsum" id="8DFM"/>
<dbReference type="PDBsum" id="8DFP"/>
<dbReference type="PDBsum" id="8DFQ"/>
<dbReference type="PDBsum" id="8PQ9"/>
<dbReference type="PDBsum" id="8PQA"/>
<dbReference type="PDBsum" id="8PQB"/>
<dbReference type="PDBsum" id="8PQC"/>
<dbReference type="PDBsum" id="8PQD"/>
<dbReference type="PDBsum" id="8PQE"/>
<dbReference type="PDBsum" id="8PQF"/>
<dbReference type="PDBsum" id="8PQG"/>
<dbReference type="EMDB" id="EMD-27408"/>
<dbReference type="EMDB" id="EMD-27410"/>
<dbReference type="EMDB" id="EMD-27411"/>
<dbReference type="SMR" id="P10721"/>
<dbReference type="BioGRID" id="110015">
    <property type="interactions" value="104"/>
</dbReference>
<dbReference type="CORUM" id="P10721"/>
<dbReference type="DIP" id="DIP-1055N"/>
<dbReference type="FunCoup" id="P10721">
    <property type="interactions" value="1086"/>
</dbReference>
<dbReference type="IntAct" id="P10721">
    <property type="interactions" value="100"/>
</dbReference>
<dbReference type="MINT" id="P10721"/>
<dbReference type="STRING" id="9606.ENSP00000288135"/>
<dbReference type="BindingDB" id="P10721"/>
<dbReference type="ChEMBL" id="CHEMBL1936"/>
<dbReference type="DrugBank" id="DB12742">
    <property type="generic name" value="Amuvatinib"/>
</dbReference>
<dbReference type="DrugBank" id="DB09103">
    <property type="generic name" value="Ancestim"/>
</dbReference>
<dbReference type="DrugBank" id="DB15233">
    <property type="generic name" value="Avapritinib"/>
</dbReference>
<dbReference type="DrugBank" id="DB18041">
    <property type="generic name" value="Bezuclastinib"/>
</dbReference>
<dbReference type="DrugBank" id="DB01254">
    <property type="generic name" value="Dasatinib"/>
</dbReference>
<dbReference type="DrugBank" id="DB12147">
    <property type="generic name" value="Erdafitinib"/>
</dbReference>
<dbReference type="DrugBank" id="DB11741">
    <property type="generic name" value="Famitinib"/>
</dbReference>
<dbReference type="DrugBank" id="DB12010">
    <property type="generic name" value="Fostamatinib"/>
</dbReference>
<dbReference type="DrugBank" id="DB00619">
    <property type="generic name" value="Imatinib"/>
</dbReference>
<dbReference type="DrugBank" id="DB17140">
    <property type="generic name" value="JNJ-28312141"/>
</dbReference>
<dbReference type="DrugBank" id="DB09078">
    <property type="generic name" value="Lenvatinib"/>
</dbReference>
<dbReference type="DrugBank" id="DB06080">
    <property type="generic name" value="Linifanib"/>
</dbReference>
<dbReference type="DrugBank" id="DB06595">
    <property type="generic name" value="Midostaurin"/>
</dbReference>
<dbReference type="DrugBank" id="DB05575">
    <property type="generic name" value="Motesanib"/>
</dbReference>
<dbReference type="DrugBank" id="DB04868">
    <property type="generic name" value="Nilotinib"/>
</dbReference>
<dbReference type="DrugBank" id="DB05913">
    <property type="generic name" value="OSI-930"/>
</dbReference>
<dbReference type="DrugBank" id="DB06589">
    <property type="generic name" value="Pazopanib"/>
</dbReference>
<dbReference type="DrugBank" id="DB08339">
    <property type="generic name" value="PD-166326"/>
</dbReference>
<dbReference type="DrugBank" id="DB12978">
    <property type="generic name" value="Pexidartinib"/>
</dbReference>
<dbReference type="DrugBank" id="DB01962">
    <property type="generic name" value="Phosphonotyrosine"/>
</dbReference>
<dbReference type="DrugBank" id="DB08901">
    <property type="generic name" value="Ponatinib"/>
</dbReference>
<dbReference type="DrugBank" id="DB08896">
    <property type="generic name" value="Regorafenib"/>
</dbReference>
<dbReference type="DrugBank" id="DB14840">
    <property type="generic name" value="Ripretinib"/>
</dbReference>
<dbReference type="DrugBank" id="DB06436">
    <property type="generic name" value="Semaxanib"/>
</dbReference>
<dbReference type="DrugBank" id="DB00398">
    <property type="generic name" value="Sorafenib"/>
</dbReference>
<dbReference type="DrugBank" id="DB01268">
    <property type="generic name" value="Sunitinib"/>
</dbReference>
<dbReference type="DrugBank" id="DB11800">
    <property type="generic name" value="Tivozanib"/>
</dbReference>
<dbReference type="DrugBank" id="DB05146">
    <property type="generic name" value="XL820"/>
</dbReference>
<dbReference type="DrugCentral" id="P10721"/>
<dbReference type="GuidetoPHARMACOLOGY" id="1805"/>
<dbReference type="CarbonylDB" id="P10721"/>
<dbReference type="GlyConnect" id="1492">
    <property type="glycosylation" value="3 N-Linked glycans (2 sites)"/>
</dbReference>
<dbReference type="GlyCosmos" id="P10721">
    <property type="glycosylation" value="10 sites, 4 glycans"/>
</dbReference>
<dbReference type="GlyGen" id="P10721">
    <property type="glycosylation" value="13 sites, 26 N-linked glycans (6 sites)"/>
</dbReference>
<dbReference type="iPTMnet" id="P10721"/>
<dbReference type="PhosphoSitePlus" id="P10721"/>
<dbReference type="BioMuta" id="KIT"/>
<dbReference type="DMDM" id="125472"/>
<dbReference type="CPTAC" id="CPTAC-3066"/>
<dbReference type="CPTAC" id="CPTAC-3067"/>
<dbReference type="jPOST" id="P10721"/>
<dbReference type="MassIVE" id="P10721"/>
<dbReference type="PaxDb" id="9606-ENSP00000288135"/>
<dbReference type="PeptideAtlas" id="P10721"/>
<dbReference type="ProteomicsDB" id="52640">
    <molecule id="P10721-1"/>
</dbReference>
<dbReference type="ProteomicsDB" id="52641">
    <molecule id="P10721-2"/>
</dbReference>
<dbReference type="Pumba" id="P10721"/>
<dbReference type="ABCD" id="P10721">
    <property type="antibodies" value="2 sequenced antibodies"/>
</dbReference>
<dbReference type="Antibodypedia" id="1392">
    <property type="antibodies" value="5552 antibodies from 58 providers"/>
</dbReference>
<dbReference type="DNASU" id="3815"/>
<dbReference type="Ensembl" id="ENST00000288135.6">
    <molecule id="P10721-1"/>
    <property type="protein sequence ID" value="ENSP00000288135.6"/>
    <property type="gene ID" value="ENSG00000157404.17"/>
</dbReference>
<dbReference type="Ensembl" id="ENST00000687295.1">
    <molecule id="P10721-2"/>
    <property type="protein sequence ID" value="ENSP00000509450.1"/>
    <property type="gene ID" value="ENSG00000157404.17"/>
</dbReference>
<dbReference type="GeneID" id="3815"/>
<dbReference type="KEGG" id="hsa:3815"/>
<dbReference type="MANE-Select" id="ENST00000288135.6">
    <property type="protein sequence ID" value="ENSP00000288135.6"/>
    <property type="RefSeq nucleotide sequence ID" value="NM_000222.3"/>
    <property type="RefSeq protein sequence ID" value="NP_000213.1"/>
</dbReference>
<dbReference type="UCSC" id="uc010igr.4">
    <molecule id="P10721-1"/>
    <property type="organism name" value="human"/>
</dbReference>
<dbReference type="AGR" id="HGNC:6342"/>
<dbReference type="CTD" id="3815"/>
<dbReference type="DisGeNET" id="3815"/>
<dbReference type="GeneCards" id="KIT"/>
<dbReference type="HGNC" id="HGNC:6342">
    <property type="gene designation" value="KIT"/>
</dbReference>
<dbReference type="HPA" id="ENSG00000157404">
    <property type="expression patterns" value="Tissue enhanced (breast)"/>
</dbReference>
<dbReference type="MalaCards" id="KIT"/>
<dbReference type="MIM" id="154800">
    <property type="type" value="phenotype"/>
</dbReference>
<dbReference type="MIM" id="164920">
    <property type="type" value="gene"/>
</dbReference>
<dbReference type="MIM" id="172800">
    <property type="type" value="phenotype"/>
</dbReference>
<dbReference type="MIM" id="273300">
    <property type="type" value="phenotype"/>
</dbReference>
<dbReference type="MIM" id="601626">
    <property type="type" value="phenotype"/>
</dbReference>
<dbReference type="MIM" id="606764">
    <property type="type" value="phenotype"/>
</dbReference>
<dbReference type="neXtProt" id="NX_P10721"/>
<dbReference type="OpenTargets" id="ENSG00000157404"/>
<dbReference type="Orphanet" id="566393">
    <property type="disease" value="Acute mast cell leukemia"/>
</dbReference>
<dbReference type="Orphanet" id="98834">
    <property type="disease" value="Acute myeloblastic leukemia with maturation"/>
</dbReference>
<dbReference type="Orphanet" id="98829">
    <property type="disease" value="Acute myeloid leukemia with abnormal bone marrow eosinophils inv(16)(p13q22) or t(16;16)(p13;q22)"/>
</dbReference>
<dbReference type="Orphanet" id="102724">
    <property type="disease" value="Acute myeloid leukemia with t(8;21)(q22;q22) translocation"/>
</dbReference>
<dbReference type="Orphanet" id="280785">
    <property type="disease" value="Bullous diffuse cutaneous mastocytosis"/>
</dbReference>
<dbReference type="Orphanet" id="566396">
    <property type="disease" value="Chronic mast cell leukemia"/>
</dbReference>
<dbReference type="Orphanet" id="79455">
    <property type="disease" value="Cutaneous mastocytoma"/>
</dbReference>
<dbReference type="Orphanet" id="44890">
    <property type="disease" value="Gastrointestinal stromal tumor"/>
</dbReference>
<dbReference type="Orphanet" id="158778">
    <property type="disease" value="Isolated bone marrow mastocytosis"/>
</dbReference>
<dbReference type="Orphanet" id="158772">
    <property type="disease" value="Nodular urticaria pigmentosa"/>
</dbReference>
<dbReference type="Orphanet" id="2884">
    <property type="disease" value="Piebaldism"/>
</dbReference>
<dbReference type="Orphanet" id="158769">
    <property type="disease" value="Plaque-form urticaria pigmentosa"/>
</dbReference>
<dbReference type="Orphanet" id="280794">
    <property type="disease" value="Pseudoxanthomatous diffuse cutaneous mastocytosis"/>
</dbReference>
<dbReference type="Orphanet" id="158775">
    <property type="disease" value="Smoldering systemic mastocytosis"/>
</dbReference>
<dbReference type="Orphanet" id="98849">
    <property type="disease" value="Systemic mastocytosis with associated hematologic neoplasm"/>
</dbReference>
<dbReference type="Orphanet" id="90389">
    <property type="disease" value="Telangiectasia macularis eruptiva perstans"/>
</dbReference>
<dbReference type="Orphanet" id="842">
    <property type="disease" value="Testicular seminomatous germ cell tumor"/>
</dbReference>
<dbReference type="Orphanet" id="158766">
    <property type="disease" value="Typical urticaria pigmentosa"/>
</dbReference>
<dbReference type="PharmGKB" id="PA30128"/>
<dbReference type="VEuPathDB" id="HostDB:ENSG00000157404"/>
<dbReference type="eggNOG" id="KOG0200">
    <property type="taxonomic scope" value="Eukaryota"/>
</dbReference>
<dbReference type="GeneTree" id="ENSGT00940000155626"/>
<dbReference type="HOGENOM" id="CLU_000288_49_0_1"/>
<dbReference type="InParanoid" id="P10721"/>
<dbReference type="OMA" id="ANEECEW"/>
<dbReference type="OrthoDB" id="6077854at2759"/>
<dbReference type="PAN-GO" id="P10721">
    <property type="GO annotations" value="10 GO annotations based on evolutionary models"/>
</dbReference>
<dbReference type="PhylomeDB" id="P10721"/>
<dbReference type="TreeFam" id="TF325768"/>
<dbReference type="BRENDA" id="2.7.10.1">
    <property type="organism ID" value="2681"/>
</dbReference>
<dbReference type="PathwayCommons" id="P10721"/>
<dbReference type="Reactome" id="R-HSA-1257604">
    <property type="pathway name" value="PIP3 activates AKT signaling"/>
</dbReference>
<dbReference type="Reactome" id="R-HSA-1433557">
    <property type="pathway name" value="Signaling by SCF-KIT"/>
</dbReference>
<dbReference type="Reactome" id="R-HSA-1433559">
    <property type="pathway name" value="Regulation of KIT signaling"/>
</dbReference>
<dbReference type="Reactome" id="R-HSA-2219530">
    <property type="pathway name" value="Constitutive Signaling by Aberrant PI3K in Cancer"/>
</dbReference>
<dbReference type="Reactome" id="R-HSA-5673001">
    <property type="pathway name" value="RAF/MAP kinase cascade"/>
</dbReference>
<dbReference type="Reactome" id="R-HSA-6811558">
    <property type="pathway name" value="PI5P, PP2A and IER3 Regulate PI3K/AKT Signaling"/>
</dbReference>
<dbReference type="Reactome" id="R-HSA-8866910">
    <property type="pathway name" value="TFAP2 (AP-2) family regulates transcription of growth factors and their receptors"/>
</dbReference>
<dbReference type="Reactome" id="R-HSA-9669914">
    <property type="pathway name" value="Dasatinib-resistant KIT mutants"/>
</dbReference>
<dbReference type="Reactome" id="R-HSA-9669917">
    <property type="pathway name" value="Imatinib-resistant KIT mutants"/>
</dbReference>
<dbReference type="Reactome" id="R-HSA-9669921">
    <property type="pathway name" value="KIT mutants bind TKIs"/>
</dbReference>
<dbReference type="Reactome" id="R-HSA-9669924">
    <property type="pathway name" value="Masitinib-resistant KIT mutants"/>
</dbReference>
<dbReference type="Reactome" id="R-HSA-9669926">
    <property type="pathway name" value="Nilotinib-resistant KIT mutants"/>
</dbReference>
<dbReference type="Reactome" id="R-HSA-9669929">
    <property type="pathway name" value="Regorafenib-resistant KIT mutants"/>
</dbReference>
<dbReference type="Reactome" id="R-HSA-9669933">
    <property type="pathway name" value="Signaling by kinase domain mutants of KIT"/>
</dbReference>
<dbReference type="Reactome" id="R-HSA-9669934">
    <property type="pathway name" value="Sunitinib-resistant KIT mutants"/>
</dbReference>
<dbReference type="Reactome" id="R-HSA-9669935">
    <property type="pathway name" value="Signaling by juxtamembrane domain KIT mutants"/>
</dbReference>
<dbReference type="Reactome" id="R-HSA-9669936">
    <property type="pathway name" value="Sorafenib-resistant KIT mutants"/>
</dbReference>
<dbReference type="Reactome" id="R-HSA-9670439">
    <property type="pathway name" value="Signaling by phosphorylated juxtamembrane, extracellular and kinase domain KIT mutants"/>
</dbReference>
<dbReference type="Reactome" id="R-HSA-9680187">
    <property type="pathway name" value="Signaling by extracellular domain mutants of KIT"/>
</dbReference>
<dbReference type="Reactome" id="R-HSA-9856649">
    <property type="pathway name" value="Transcriptional and post-translational regulation of MITF-M expression and activity"/>
</dbReference>
<dbReference type="SignaLink" id="P10721"/>
<dbReference type="SIGNOR" id="P10721"/>
<dbReference type="BioGRID-ORCS" id="3815">
    <property type="hits" value="9 hits in 1192 CRISPR screens"/>
</dbReference>
<dbReference type="CD-CODE" id="91857CE7">
    <property type="entry name" value="Nucleolus"/>
</dbReference>
<dbReference type="ChiTaRS" id="KIT">
    <property type="organism name" value="human"/>
</dbReference>
<dbReference type="EvolutionaryTrace" id="P10721"/>
<dbReference type="GeneWiki" id="CD117"/>
<dbReference type="GenomeRNAi" id="3815"/>
<dbReference type="Pharos" id="P10721">
    <property type="development level" value="Tclin"/>
</dbReference>
<dbReference type="PRO" id="PR:P10721"/>
<dbReference type="Proteomes" id="UP000005640">
    <property type="component" value="Chromosome 4"/>
</dbReference>
<dbReference type="RNAct" id="P10721">
    <property type="molecule type" value="protein"/>
</dbReference>
<dbReference type="Bgee" id="ENSG00000157404">
    <property type="expression patterns" value="Expressed in lateral nuclear group of thalamus and 193 other cell types or tissues"/>
</dbReference>
<dbReference type="GO" id="GO:0001669">
    <property type="term" value="C:acrosomal vesicle"/>
    <property type="evidence" value="ECO:0007669"/>
    <property type="project" value="Ensembl"/>
</dbReference>
<dbReference type="GO" id="GO:0005911">
    <property type="term" value="C:cell-cell junction"/>
    <property type="evidence" value="ECO:0007669"/>
    <property type="project" value="Ensembl"/>
</dbReference>
<dbReference type="GO" id="GO:0009898">
    <property type="term" value="C:cytoplasmic side of plasma membrane"/>
    <property type="evidence" value="ECO:0007669"/>
    <property type="project" value="Ensembl"/>
</dbReference>
<dbReference type="GO" id="GO:0009897">
    <property type="term" value="C:external side of plasma membrane"/>
    <property type="evidence" value="ECO:0007669"/>
    <property type="project" value="Ensembl"/>
</dbReference>
<dbReference type="GO" id="GO:0005615">
    <property type="term" value="C:extracellular space"/>
    <property type="evidence" value="ECO:0000314"/>
    <property type="project" value="BHF-UCL"/>
</dbReference>
<dbReference type="GO" id="GO:0001650">
    <property type="term" value="C:fibrillar center"/>
    <property type="evidence" value="ECO:0000314"/>
    <property type="project" value="HPA"/>
</dbReference>
<dbReference type="GO" id="GO:0005886">
    <property type="term" value="C:plasma membrane"/>
    <property type="evidence" value="ECO:0000314"/>
    <property type="project" value="HPA"/>
</dbReference>
<dbReference type="GO" id="GO:0043235">
    <property type="term" value="C:receptor complex"/>
    <property type="evidence" value="ECO:0000318"/>
    <property type="project" value="GO_Central"/>
</dbReference>
<dbReference type="GO" id="GO:0005524">
    <property type="term" value="F:ATP binding"/>
    <property type="evidence" value="ECO:0007669"/>
    <property type="project" value="UniProtKB-KW"/>
</dbReference>
<dbReference type="GO" id="GO:0019955">
    <property type="term" value="F:cytokine binding"/>
    <property type="evidence" value="ECO:0000314"/>
    <property type="project" value="UniProtKB"/>
</dbReference>
<dbReference type="GO" id="GO:0019838">
    <property type="term" value="F:growth factor binding"/>
    <property type="evidence" value="ECO:0000318"/>
    <property type="project" value="GO_Central"/>
</dbReference>
<dbReference type="GO" id="GO:0046872">
    <property type="term" value="F:metal ion binding"/>
    <property type="evidence" value="ECO:0007669"/>
    <property type="project" value="UniProtKB-KW"/>
</dbReference>
<dbReference type="GO" id="GO:0002020">
    <property type="term" value="F:protease binding"/>
    <property type="evidence" value="ECO:0007669"/>
    <property type="project" value="Ensembl"/>
</dbReference>
<dbReference type="GO" id="GO:0042803">
    <property type="term" value="F:protein homodimerization activity"/>
    <property type="evidence" value="ECO:0000353"/>
    <property type="project" value="UniProtKB"/>
</dbReference>
<dbReference type="GO" id="GO:0004713">
    <property type="term" value="F:protein tyrosine kinase activity"/>
    <property type="evidence" value="ECO:0000304"/>
    <property type="project" value="Reactome"/>
</dbReference>
<dbReference type="GO" id="GO:0042169">
    <property type="term" value="F:SH2 domain binding"/>
    <property type="evidence" value="ECO:0007669"/>
    <property type="project" value="Ensembl"/>
</dbReference>
<dbReference type="GO" id="GO:0005020">
    <property type="term" value="F:stem cell factor receptor activity"/>
    <property type="evidence" value="ECO:0007669"/>
    <property type="project" value="Ensembl"/>
</dbReference>
<dbReference type="GO" id="GO:0004714">
    <property type="term" value="F:transmembrane receptor protein tyrosine kinase activity"/>
    <property type="evidence" value="ECO:0000314"/>
    <property type="project" value="UniProtKB"/>
</dbReference>
<dbReference type="GO" id="GO:0030036">
    <property type="term" value="P:actin cytoskeleton organization"/>
    <property type="evidence" value="ECO:0000314"/>
    <property type="project" value="UniProtKB"/>
</dbReference>
<dbReference type="GO" id="GO:0030183">
    <property type="term" value="P:B cell differentiation"/>
    <property type="evidence" value="ECO:0000318"/>
    <property type="project" value="GO_Central"/>
</dbReference>
<dbReference type="GO" id="GO:0060326">
    <property type="term" value="P:cell chemotaxis"/>
    <property type="evidence" value="ECO:0000314"/>
    <property type="project" value="UniProtKB"/>
</dbReference>
<dbReference type="GO" id="GO:0016477">
    <property type="term" value="P:cell migration"/>
    <property type="evidence" value="ECO:0000318"/>
    <property type="project" value="GO_Central"/>
</dbReference>
<dbReference type="GO" id="GO:0019221">
    <property type="term" value="P:cytokine-mediated signaling pathway"/>
    <property type="evidence" value="ECO:0000314"/>
    <property type="project" value="UniProtKB"/>
</dbReference>
<dbReference type="GO" id="GO:0050910">
    <property type="term" value="P:detection of mechanical stimulus involved in sensory perception of sound"/>
    <property type="evidence" value="ECO:0000250"/>
    <property type="project" value="UniProtKB"/>
</dbReference>
<dbReference type="GO" id="GO:0048565">
    <property type="term" value="P:digestive tract development"/>
    <property type="evidence" value="ECO:0000250"/>
    <property type="project" value="UniProtKB"/>
</dbReference>
<dbReference type="GO" id="GO:0035234">
    <property type="term" value="P:ectopic germ cell programmed cell death"/>
    <property type="evidence" value="ECO:0007669"/>
    <property type="project" value="Ensembl"/>
</dbReference>
<dbReference type="GO" id="GO:0035162">
    <property type="term" value="P:embryonic hemopoiesis"/>
    <property type="evidence" value="ECO:0000250"/>
    <property type="project" value="UniProtKB"/>
</dbReference>
<dbReference type="GO" id="GO:0050673">
    <property type="term" value="P:epithelial cell proliferation"/>
    <property type="evidence" value="ECO:0007669"/>
    <property type="project" value="Ensembl"/>
</dbReference>
<dbReference type="GO" id="GO:0030218">
    <property type="term" value="P:erythrocyte differentiation"/>
    <property type="evidence" value="ECO:0000250"/>
    <property type="project" value="UniProtKB"/>
</dbReference>
<dbReference type="GO" id="GO:0038162">
    <property type="term" value="P:erythropoietin-mediated signaling pathway"/>
    <property type="evidence" value="ECO:0000250"/>
    <property type="project" value="UniProtKB"/>
</dbReference>
<dbReference type="GO" id="GO:0038093">
    <property type="term" value="P:Fc receptor signaling pathway"/>
    <property type="evidence" value="ECO:0000314"/>
    <property type="project" value="UniProtKB"/>
</dbReference>
<dbReference type="GO" id="GO:0008354">
    <property type="term" value="P:germ cell migration"/>
    <property type="evidence" value="ECO:0007669"/>
    <property type="project" value="Ensembl"/>
</dbReference>
<dbReference type="GO" id="GO:0006687">
    <property type="term" value="P:glycosphingolipid metabolic process"/>
    <property type="evidence" value="ECO:0007669"/>
    <property type="project" value="Ensembl"/>
</dbReference>
<dbReference type="GO" id="GO:0002244">
    <property type="term" value="P:hematopoietic progenitor cell differentiation"/>
    <property type="evidence" value="ECO:0000318"/>
    <property type="project" value="GO_Central"/>
</dbReference>
<dbReference type="GO" id="GO:0035701">
    <property type="term" value="P:hematopoietic stem cell migration"/>
    <property type="evidence" value="ECO:0007669"/>
    <property type="project" value="Ensembl"/>
</dbReference>
<dbReference type="GO" id="GO:0030097">
    <property type="term" value="P:hemopoiesis"/>
    <property type="evidence" value="ECO:0000304"/>
    <property type="project" value="UniProtKB"/>
</dbReference>
<dbReference type="GO" id="GO:0002327">
    <property type="term" value="P:immature B cell differentiation"/>
    <property type="evidence" value="ECO:0000250"/>
    <property type="project" value="UniProtKB"/>
</dbReference>
<dbReference type="GO" id="GO:0006954">
    <property type="term" value="P:inflammatory response"/>
    <property type="evidence" value="ECO:0000250"/>
    <property type="project" value="UniProtKB"/>
</dbReference>
<dbReference type="GO" id="GO:0035556">
    <property type="term" value="P:intracellular signal transduction"/>
    <property type="evidence" value="ECO:0007669"/>
    <property type="project" value="Ensembl"/>
</dbReference>
<dbReference type="GO" id="GO:0038109">
    <property type="term" value="P:Kit signaling pathway"/>
    <property type="evidence" value="ECO:0000314"/>
    <property type="project" value="UniProtKB"/>
</dbReference>
<dbReference type="GO" id="GO:0030032">
    <property type="term" value="P:lamellipodium assembly"/>
    <property type="evidence" value="ECO:0000250"/>
    <property type="project" value="UniProtKB"/>
</dbReference>
<dbReference type="GO" id="GO:0002320">
    <property type="term" value="P:lymphoid progenitor cell differentiation"/>
    <property type="evidence" value="ECO:0007669"/>
    <property type="project" value="Ensembl"/>
</dbReference>
<dbReference type="GO" id="GO:0008584">
    <property type="term" value="P:male gonad development"/>
    <property type="evidence" value="ECO:0000270"/>
    <property type="project" value="UniProtKB"/>
</dbReference>
<dbReference type="GO" id="GO:0002551">
    <property type="term" value="P:mast cell chemotaxis"/>
    <property type="evidence" value="ECO:0000314"/>
    <property type="project" value="UniProtKB"/>
</dbReference>
<dbReference type="GO" id="GO:0043303">
    <property type="term" value="P:mast cell degranulation"/>
    <property type="evidence" value="ECO:0000315"/>
    <property type="project" value="UniProtKB"/>
</dbReference>
<dbReference type="GO" id="GO:0060374">
    <property type="term" value="P:mast cell differentiation"/>
    <property type="evidence" value="ECO:0000250"/>
    <property type="project" value="UniProtKB"/>
</dbReference>
<dbReference type="GO" id="GO:0070662">
    <property type="term" value="P:mast cell proliferation"/>
    <property type="evidence" value="ECO:0000304"/>
    <property type="project" value="UniProtKB"/>
</dbReference>
<dbReference type="GO" id="GO:0035855">
    <property type="term" value="P:megakaryocyte development"/>
    <property type="evidence" value="ECO:0000250"/>
    <property type="project" value="UniProtKB"/>
</dbReference>
<dbReference type="GO" id="GO:0097326">
    <property type="term" value="P:melanocyte adhesion"/>
    <property type="evidence" value="ECO:0000250"/>
    <property type="project" value="UniProtKB"/>
</dbReference>
<dbReference type="GO" id="GO:0030318">
    <property type="term" value="P:melanocyte differentiation"/>
    <property type="evidence" value="ECO:0000250"/>
    <property type="project" value="UniProtKB"/>
</dbReference>
<dbReference type="GO" id="GO:0097324">
    <property type="term" value="P:melanocyte migration"/>
    <property type="evidence" value="ECO:0000250"/>
    <property type="project" value="UniProtKB"/>
</dbReference>
<dbReference type="GO" id="GO:0002318">
    <property type="term" value="P:myeloid progenitor cell differentiation"/>
    <property type="evidence" value="ECO:0007669"/>
    <property type="project" value="Ensembl"/>
</dbReference>
<dbReference type="GO" id="GO:0051093">
    <property type="term" value="P:negative regulation of developmental process"/>
    <property type="evidence" value="ECO:0007669"/>
    <property type="project" value="Ensembl"/>
</dbReference>
<dbReference type="GO" id="GO:0043069">
    <property type="term" value="P:negative regulation of programmed cell death"/>
    <property type="evidence" value="ECO:0007669"/>
    <property type="project" value="Ensembl"/>
</dbReference>
<dbReference type="GO" id="GO:2000242">
    <property type="term" value="P:negative regulation of reproductive process"/>
    <property type="evidence" value="ECO:0007669"/>
    <property type="project" value="Ensembl"/>
</dbReference>
<dbReference type="GO" id="GO:0001541">
    <property type="term" value="P:ovarian follicle development"/>
    <property type="evidence" value="ECO:0000250"/>
    <property type="project" value="UniProtKB"/>
</dbReference>
<dbReference type="GO" id="GO:0043473">
    <property type="term" value="P:pigmentation"/>
    <property type="evidence" value="ECO:0000250"/>
    <property type="project" value="UniProtKB"/>
</dbReference>
<dbReference type="GO" id="GO:0030335">
    <property type="term" value="P:positive regulation of cell migration"/>
    <property type="evidence" value="ECO:0000318"/>
    <property type="project" value="GO_Central"/>
</dbReference>
<dbReference type="GO" id="GO:0008284">
    <property type="term" value="P:positive regulation of cell population proliferation"/>
    <property type="evidence" value="ECO:0000318"/>
    <property type="project" value="GO_Central"/>
</dbReference>
<dbReference type="GO" id="GO:1904343">
    <property type="term" value="P:positive regulation of colon smooth muscle contraction"/>
    <property type="evidence" value="ECO:0007669"/>
    <property type="project" value="Ensembl"/>
</dbReference>
<dbReference type="GO" id="GO:0002732">
    <property type="term" value="P:positive regulation of dendritic cell cytokine production"/>
    <property type="evidence" value="ECO:0000250"/>
    <property type="project" value="UniProtKB"/>
</dbReference>
<dbReference type="GO" id="GO:0051091">
    <property type="term" value="P:positive regulation of DNA-binding transcription factor activity"/>
    <property type="evidence" value="ECO:0000315"/>
    <property type="project" value="UniProtKB"/>
</dbReference>
<dbReference type="GO" id="GO:0048170">
    <property type="term" value="P:positive regulation of long-term neuronal synaptic plasticity"/>
    <property type="evidence" value="ECO:0007669"/>
    <property type="project" value="Ensembl"/>
</dbReference>
<dbReference type="GO" id="GO:0043410">
    <property type="term" value="P:positive regulation of MAPK cascade"/>
    <property type="evidence" value="ECO:0000315"/>
    <property type="project" value="UniProtKB"/>
</dbReference>
<dbReference type="GO" id="GO:0032765">
    <property type="term" value="P:positive regulation of mast cell cytokine production"/>
    <property type="evidence" value="ECO:0000314"/>
    <property type="project" value="UniProtKB"/>
</dbReference>
<dbReference type="GO" id="GO:0070668">
    <property type="term" value="P:positive regulation of mast cell proliferation"/>
    <property type="evidence" value="ECO:0007669"/>
    <property type="project" value="Ensembl"/>
</dbReference>
<dbReference type="GO" id="GO:0045747">
    <property type="term" value="P:positive regulation of Notch signaling pathway"/>
    <property type="evidence" value="ECO:0007669"/>
    <property type="project" value="Ensembl"/>
</dbReference>
<dbReference type="GO" id="GO:0051897">
    <property type="term" value="P:positive regulation of phosphatidylinositol 3-kinase/protein kinase B signal transduction"/>
    <property type="evidence" value="ECO:0000304"/>
    <property type="project" value="UniProtKB"/>
</dbReference>
<dbReference type="GO" id="GO:0031274">
    <property type="term" value="P:positive regulation of pseudopodium assembly"/>
    <property type="evidence" value="ECO:0007669"/>
    <property type="project" value="Ensembl"/>
</dbReference>
<dbReference type="GO" id="GO:0120072">
    <property type="term" value="P:positive regulation of pyloric antrum smooth muscle contraction"/>
    <property type="evidence" value="ECO:0007669"/>
    <property type="project" value="Ensembl"/>
</dbReference>
<dbReference type="GO" id="GO:0046427">
    <property type="term" value="P:positive regulation of receptor signaling pathway via JAK-STAT"/>
    <property type="evidence" value="ECO:0000315"/>
    <property type="project" value="UniProtKB"/>
</dbReference>
<dbReference type="GO" id="GO:1904349">
    <property type="term" value="P:positive regulation of small intestine smooth muscle contraction"/>
    <property type="evidence" value="ECO:0007669"/>
    <property type="project" value="Ensembl"/>
</dbReference>
<dbReference type="GO" id="GO:0042531">
    <property type="term" value="P:positive regulation of tyrosine phosphorylation of STAT protein"/>
    <property type="evidence" value="ECO:0000315"/>
    <property type="project" value="UniProtKB"/>
</dbReference>
<dbReference type="GO" id="GO:1905065">
    <property type="term" value="P:positive regulation of vascular associated smooth muscle cell differentiation"/>
    <property type="evidence" value="ECO:0000314"/>
    <property type="project" value="BHF-UCL"/>
</dbReference>
<dbReference type="GO" id="GO:0046777">
    <property type="term" value="P:protein autophosphorylation"/>
    <property type="evidence" value="ECO:0000314"/>
    <property type="project" value="UniProtKB"/>
</dbReference>
<dbReference type="GO" id="GO:1904251">
    <property type="term" value="P:regulation of bile acid metabolic process"/>
    <property type="evidence" value="ECO:0007669"/>
    <property type="project" value="Ensembl"/>
</dbReference>
<dbReference type="GO" id="GO:0042127">
    <property type="term" value="P:regulation of cell population proliferation"/>
    <property type="evidence" value="ECO:0000304"/>
    <property type="project" value="UniProtKB"/>
</dbReference>
<dbReference type="GO" id="GO:0008360">
    <property type="term" value="P:regulation of cell shape"/>
    <property type="evidence" value="ECO:0000250"/>
    <property type="project" value="UniProtKB"/>
</dbReference>
<dbReference type="GO" id="GO:0046686">
    <property type="term" value="P:response to cadmium ion"/>
    <property type="evidence" value="ECO:0007669"/>
    <property type="project" value="Ensembl"/>
</dbReference>
<dbReference type="GO" id="GO:0007165">
    <property type="term" value="P:signal transduction"/>
    <property type="evidence" value="ECO:0000304"/>
    <property type="project" value="ProtInc"/>
</dbReference>
<dbReference type="GO" id="GO:0035019">
    <property type="term" value="P:somatic stem cell population maintenance"/>
    <property type="evidence" value="ECO:0007669"/>
    <property type="project" value="Ensembl"/>
</dbReference>
<dbReference type="GO" id="GO:0007286">
    <property type="term" value="P:spermatid development"/>
    <property type="evidence" value="ECO:0007669"/>
    <property type="project" value="Ensembl"/>
</dbReference>
<dbReference type="GO" id="GO:0007283">
    <property type="term" value="P:spermatogenesis"/>
    <property type="evidence" value="ECO:0000250"/>
    <property type="project" value="UniProtKB"/>
</dbReference>
<dbReference type="GO" id="GO:0048863">
    <property type="term" value="P:stem cell differentiation"/>
    <property type="evidence" value="ECO:0000250"/>
    <property type="project" value="UniProtKB"/>
</dbReference>
<dbReference type="GO" id="GO:0019827">
    <property type="term" value="P:stem cell population maintenance"/>
    <property type="evidence" value="ECO:0000304"/>
    <property type="project" value="UniProtKB"/>
</dbReference>
<dbReference type="GO" id="GO:0030217">
    <property type="term" value="P:T cell differentiation"/>
    <property type="evidence" value="ECO:0000250"/>
    <property type="project" value="UniProtKB"/>
</dbReference>
<dbReference type="GO" id="GO:0043586">
    <property type="term" value="P:tongue development"/>
    <property type="evidence" value="ECO:0007669"/>
    <property type="project" value="Ensembl"/>
</dbReference>
<dbReference type="GO" id="GO:0008542">
    <property type="term" value="P:visual learning"/>
    <property type="evidence" value="ECO:0007669"/>
    <property type="project" value="Ensembl"/>
</dbReference>
<dbReference type="CDD" id="cd00096">
    <property type="entry name" value="Ig"/>
    <property type="match status" value="2"/>
</dbReference>
<dbReference type="CDD" id="cd05860">
    <property type="entry name" value="IgI_4_SCFR"/>
    <property type="match status" value="1"/>
</dbReference>
<dbReference type="CDD" id="cd05104">
    <property type="entry name" value="PTKc_Kit"/>
    <property type="match status" value="1"/>
</dbReference>
<dbReference type="DisProt" id="DP02247"/>
<dbReference type="FunFam" id="1.10.510.10:FF:000177">
    <property type="entry name" value="Mast/stem cell growth factor receptor"/>
    <property type="match status" value="1"/>
</dbReference>
<dbReference type="FunFam" id="2.60.40.10:FF:000422">
    <property type="entry name" value="Mast/stem cell growth factor receptor"/>
    <property type="match status" value="1"/>
</dbReference>
<dbReference type="FunFam" id="2.60.40.10:FF:000429">
    <property type="entry name" value="Mast/stem cell growth factor receptor"/>
    <property type="match status" value="1"/>
</dbReference>
<dbReference type="FunFam" id="2.60.40.10:FF:000469">
    <property type="entry name" value="Mast/stem cell growth factor receptor"/>
    <property type="match status" value="1"/>
</dbReference>
<dbReference type="FunFam" id="2.60.40.10:FF:000544">
    <property type="entry name" value="Mast/stem cell growth factor receptor"/>
    <property type="match status" value="1"/>
</dbReference>
<dbReference type="FunFam" id="2.60.40.10:FF:000815">
    <property type="entry name" value="Mast/stem cell growth factor receptor"/>
    <property type="match status" value="1"/>
</dbReference>
<dbReference type="FunFam" id="3.30.200.20:FF:000025">
    <property type="entry name" value="Platelet-derived growth factor receptor alpha"/>
    <property type="match status" value="1"/>
</dbReference>
<dbReference type="Gene3D" id="2.60.40.10">
    <property type="entry name" value="Immunoglobulins"/>
    <property type="match status" value="5"/>
</dbReference>
<dbReference type="Gene3D" id="3.30.200.20">
    <property type="entry name" value="Phosphorylase Kinase, domain 1"/>
    <property type="match status" value="1"/>
</dbReference>
<dbReference type="Gene3D" id="1.10.510.10">
    <property type="entry name" value="Transferase(Phosphotransferase) domain 1"/>
    <property type="match status" value="1"/>
</dbReference>
<dbReference type="InterPro" id="IPR007110">
    <property type="entry name" value="Ig-like_dom"/>
</dbReference>
<dbReference type="InterPro" id="IPR036179">
    <property type="entry name" value="Ig-like_dom_sf"/>
</dbReference>
<dbReference type="InterPro" id="IPR013783">
    <property type="entry name" value="Ig-like_fold"/>
</dbReference>
<dbReference type="InterPro" id="IPR003599">
    <property type="entry name" value="Ig_sub"/>
</dbReference>
<dbReference type="InterPro" id="IPR003598">
    <property type="entry name" value="Ig_sub2"/>
</dbReference>
<dbReference type="InterPro" id="IPR013151">
    <property type="entry name" value="Immunoglobulin_dom"/>
</dbReference>
<dbReference type="InterPro" id="IPR011009">
    <property type="entry name" value="Kinase-like_dom_sf"/>
</dbReference>
<dbReference type="InterPro" id="IPR000719">
    <property type="entry name" value="Prot_kinase_dom"/>
</dbReference>
<dbReference type="InterPro" id="IPR017441">
    <property type="entry name" value="Protein_kinase_ATP_BS"/>
</dbReference>
<dbReference type="InterPro" id="IPR050122">
    <property type="entry name" value="RTK"/>
</dbReference>
<dbReference type="InterPro" id="IPR027263">
    <property type="entry name" value="SCGF_receptor"/>
</dbReference>
<dbReference type="InterPro" id="IPR001245">
    <property type="entry name" value="Ser-Thr/Tyr_kinase_cat_dom"/>
</dbReference>
<dbReference type="InterPro" id="IPR008266">
    <property type="entry name" value="Tyr_kinase_AS"/>
</dbReference>
<dbReference type="InterPro" id="IPR020635">
    <property type="entry name" value="Tyr_kinase_cat_dom"/>
</dbReference>
<dbReference type="InterPro" id="IPR001824">
    <property type="entry name" value="Tyr_kinase_rcpt_3_CS"/>
</dbReference>
<dbReference type="PANTHER" id="PTHR24416:SF46">
    <property type="entry name" value="MAST_STEM CELL GROWTH FACTOR RECEPTOR KIT"/>
    <property type="match status" value="1"/>
</dbReference>
<dbReference type="PANTHER" id="PTHR24416">
    <property type="entry name" value="TYROSINE-PROTEIN KINASE RECEPTOR"/>
    <property type="match status" value="1"/>
</dbReference>
<dbReference type="Pfam" id="PF00047">
    <property type="entry name" value="ig"/>
    <property type="match status" value="1"/>
</dbReference>
<dbReference type="Pfam" id="PF07714">
    <property type="entry name" value="PK_Tyr_Ser-Thr"/>
    <property type="match status" value="1"/>
</dbReference>
<dbReference type="PIRSF" id="PIRSF500951">
    <property type="entry name" value="SCGF_recepter"/>
    <property type="match status" value="1"/>
</dbReference>
<dbReference type="PIRSF" id="PIRSF000615">
    <property type="entry name" value="TyrPK_CSF1-R"/>
    <property type="match status" value="1"/>
</dbReference>
<dbReference type="SMART" id="SM00409">
    <property type="entry name" value="IG"/>
    <property type="match status" value="3"/>
</dbReference>
<dbReference type="SMART" id="SM00408">
    <property type="entry name" value="IGc2"/>
    <property type="match status" value="1"/>
</dbReference>
<dbReference type="SMART" id="SM00219">
    <property type="entry name" value="TyrKc"/>
    <property type="match status" value="1"/>
</dbReference>
<dbReference type="SUPFAM" id="SSF48726">
    <property type="entry name" value="Immunoglobulin"/>
    <property type="match status" value="3"/>
</dbReference>
<dbReference type="SUPFAM" id="SSF56112">
    <property type="entry name" value="Protein kinase-like (PK-like)"/>
    <property type="match status" value="1"/>
</dbReference>
<dbReference type="PROSITE" id="PS50835">
    <property type="entry name" value="IG_LIKE"/>
    <property type="match status" value="1"/>
</dbReference>
<dbReference type="PROSITE" id="PS00107">
    <property type="entry name" value="PROTEIN_KINASE_ATP"/>
    <property type="match status" value="1"/>
</dbReference>
<dbReference type="PROSITE" id="PS50011">
    <property type="entry name" value="PROTEIN_KINASE_DOM"/>
    <property type="match status" value="1"/>
</dbReference>
<dbReference type="PROSITE" id="PS00109">
    <property type="entry name" value="PROTEIN_KINASE_TYR"/>
    <property type="match status" value="1"/>
</dbReference>
<dbReference type="PROSITE" id="PS00240">
    <property type="entry name" value="RECEPTOR_TYR_KIN_III"/>
    <property type="match status" value="1"/>
</dbReference>
<organism>
    <name type="scientific">Homo sapiens</name>
    <name type="common">Human</name>
    <dbReference type="NCBI Taxonomy" id="9606"/>
    <lineage>
        <taxon>Eukaryota</taxon>
        <taxon>Metazoa</taxon>
        <taxon>Chordata</taxon>
        <taxon>Craniata</taxon>
        <taxon>Vertebrata</taxon>
        <taxon>Euteleostomi</taxon>
        <taxon>Mammalia</taxon>
        <taxon>Eutheria</taxon>
        <taxon>Euarchontoglires</taxon>
        <taxon>Primates</taxon>
        <taxon>Haplorrhini</taxon>
        <taxon>Catarrhini</taxon>
        <taxon>Hominidae</taxon>
        <taxon>Homo</taxon>
    </lineage>
</organism>
<feature type="signal peptide" evidence="2">
    <location>
        <begin position="1"/>
        <end position="25"/>
    </location>
</feature>
<feature type="chain" id="PRO_0000016754" description="Mast/stem cell growth factor receptor Kit">
    <location>
        <begin position="26"/>
        <end position="976"/>
    </location>
</feature>
<feature type="topological domain" description="Extracellular" evidence="2">
    <location>
        <begin position="26"/>
        <end position="524"/>
    </location>
</feature>
<feature type="transmembrane region" description="Helical" evidence="2">
    <location>
        <begin position="525"/>
        <end position="545"/>
    </location>
</feature>
<feature type="topological domain" description="Cytoplasmic" evidence="2">
    <location>
        <begin position="546"/>
        <end position="976"/>
    </location>
</feature>
<feature type="domain" description="Ig-like C2-type 1">
    <location>
        <begin position="27"/>
        <end position="112"/>
    </location>
</feature>
<feature type="domain" description="Ig-like C2-type 2">
    <location>
        <begin position="121"/>
        <end position="205"/>
    </location>
</feature>
<feature type="domain" description="Ig-like C2-type 3">
    <location>
        <begin position="212"/>
        <end position="308"/>
    </location>
</feature>
<feature type="domain" description="Ig-like C2-type 4">
    <location>
        <begin position="317"/>
        <end position="410"/>
    </location>
</feature>
<feature type="domain" description="Ig-like C2-type 5">
    <location>
        <begin position="413"/>
        <end position="507"/>
    </location>
</feature>
<feature type="domain" description="Protein kinase" evidence="4">
    <location>
        <begin position="589"/>
        <end position="937"/>
    </location>
</feature>
<feature type="region of interest" description="Important for interaction with phosphotyrosine-binding proteins">
    <location>
        <begin position="568"/>
        <end position="570"/>
    </location>
</feature>
<feature type="active site" description="Proton acceptor" evidence="4 5">
    <location>
        <position position="792"/>
    </location>
</feature>
<feature type="binding site">
    <location>
        <position position="568"/>
    </location>
    <ligand>
        <name>Mg(2+)</name>
        <dbReference type="ChEBI" id="CHEBI:18420"/>
    </ligand>
</feature>
<feature type="binding site">
    <location>
        <begin position="596"/>
        <end position="603"/>
    </location>
    <ligand>
        <name>ATP</name>
        <dbReference type="ChEBI" id="CHEBI:30616"/>
    </ligand>
</feature>
<feature type="binding site">
    <location>
        <position position="623"/>
    </location>
    <ligand>
        <name>ATP</name>
        <dbReference type="ChEBI" id="CHEBI:30616"/>
    </ligand>
</feature>
<feature type="binding site">
    <location>
        <begin position="671"/>
        <end position="677"/>
    </location>
    <ligand>
        <name>ATP</name>
        <dbReference type="ChEBI" id="CHEBI:30616"/>
    </ligand>
</feature>
<feature type="binding site">
    <location>
        <position position="796"/>
    </location>
    <ligand>
        <name>ATP</name>
        <dbReference type="ChEBI" id="CHEBI:30616"/>
    </ligand>
</feature>
<feature type="binding site">
    <location>
        <position position="797"/>
    </location>
    <ligand>
        <name>Mg(2+)</name>
        <dbReference type="ChEBI" id="CHEBI:18420"/>
    </ligand>
</feature>
<feature type="binding site">
    <location>
        <position position="810"/>
    </location>
    <ligand>
        <name>Mg(2+)</name>
        <dbReference type="ChEBI" id="CHEBI:18420"/>
    </ligand>
</feature>
<feature type="site" description="Important for interaction with phosphotyrosine-binding proteins">
    <location>
        <position position="936"/>
    </location>
</feature>
<feature type="modified residue" description="Phosphotyrosine; by autocatalysis" evidence="61">
    <location>
        <position position="547"/>
    </location>
</feature>
<feature type="modified residue" description="Phosphotyrosine; by autocatalysis" evidence="61">
    <location>
        <position position="553"/>
    </location>
</feature>
<feature type="modified residue" description="Phosphotyrosine; by autocatalysis" evidence="15 30 35 47">
    <location>
        <position position="568"/>
    </location>
</feature>
<feature type="modified residue" description="Phosphotyrosine; by autocatalysis" evidence="15 47">
    <location>
        <position position="570"/>
    </location>
</feature>
<feature type="modified residue" description="Phosphotyrosine; by autocatalysis" evidence="7 30 32">
    <location>
        <position position="703"/>
    </location>
</feature>
<feature type="modified residue" description="Phosphotyrosine; by autocatalysis" evidence="30 32 47">
    <location>
        <position position="721"/>
    </location>
</feature>
<feature type="modified residue" description="Phosphotyrosine; by autocatalysis" evidence="61">
    <location>
        <position position="730"/>
    </location>
</feature>
<feature type="modified residue" description="Phosphoserine; by PKC/PRKCA" evidence="42">
    <location>
        <position position="741"/>
    </location>
</feature>
<feature type="modified residue" description="Phosphoserine; by PKC/PRKCA" evidence="42">
    <location>
        <position position="746"/>
    </location>
</feature>
<feature type="modified residue" description="Phosphoserine" evidence="42">
    <location>
        <position position="821"/>
    </location>
</feature>
<feature type="modified residue" description="Phosphotyrosine; by autocatalysis" evidence="32">
    <location>
        <position position="823"/>
    </location>
</feature>
<feature type="modified residue" description="Phosphoserine" evidence="16">
    <location>
        <position position="891"/>
    </location>
</feature>
<feature type="modified residue" description="Phosphotyrosine; by autocatalysis" evidence="16 32">
    <location>
        <position position="900"/>
    </location>
</feature>
<feature type="modified residue" description="Phosphotyrosine; by autocatalysis" evidence="7 30">
    <location>
        <position position="936"/>
    </location>
</feature>
<feature type="modified residue" description="Phosphoserine" evidence="42 62">
    <location>
        <position position="959"/>
    </location>
</feature>
<feature type="glycosylation site" description="N-linked (GlcNAc...) asparagine" evidence="23 27">
    <location>
        <position position="130"/>
    </location>
</feature>
<feature type="glycosylation site" description="N-linked (GlcNAc...) asparagine" evidence="2">
    <location>
        <position position="145"/>
    </location>
</feature>
<feature type="glycosylation site" description="N-linked (GlcNAc...) asparagine" evidence="27">
    <location>
        <position position="283"/>
    </location>
</feature>
<feature type="glycosylation site" description="N-linked (GlcNAc...) asparagine" evidence="27">
    <location>
        <position position="293"/>
    </location>
</feature>
<feature type="glycosylation site" description="N-linked (GlcNAc...) asparagine" evidence="27">
    <location>
        <position position="300"/>
    </location>
</feature>
<feature type="glycosylation site" description="N-linked (GlcNAc...) asparagine" evidence="27">
    <location>
        <position position="320"/>
    </location>
</feature>
<feature type="glycosylation site" description="N-linked (GlcNAc...) asparagine" evidence="27">
    <location>
        <position position="352"/>
    </location>
</feature>
<feature type="glycosylation site" description="N-linked (GlcNAc...) asparagine" evidence="27">
    <location>
        <position position="367"/>
    </location>
</feature>
<feature type="glycosylation site" description="N-linked (GlcNAc...) asparagine" evidence="2">
    <location>
        <position position="463"/>
    </location>
</feature>
<feature type="glycosylation site" description="N-linked (GlcNAc...) asparagine" evidence="2">
    <location>
        <position position="486"/>
    </location>
</feature>
<feature type="disulfide bond" evidence="3 27">
    <location>
        <begin position="58"/>
        <end position="97"/>
    </location>
</feature>
<feature type="disulfide bond" evidence="3 27">
    <location>
        <begin position="136"/>
        <end position="186"/>
    </location>
</feature>
<feature type="disulfide bond" evidence="3 27">
    <location>
        <begin position="151"/>
        <end position="183"/>
    </location>
</feature>
<feature type="disulfide bond" evidence="3 27">
    <location>
        <begin position="233"/>
        <end position="290"/>
    </location>
</feature>
<feature type="disulfide bond" evidence="3 27">
    <location>
        <begin position="428"/>
        <end position="491"/>
    </location>
</feature>
<feature type="splice variant" id="VSP_060976" description="In isoform 3.">
    <original>MRGARGAWDFLCVLLLLLRVQTGSSQPSVSPGEPSPPSIHPGKSDLIVRVGDEIRLLCTDPGFVKWTFEILDETNENKQNEWITEKAEATNTGKYTCTNKHGLSNSIYVFVRDPAKLFLVDRSLYGKEDNDTLVRCPLTDPEVTNYSLKGCQGKPLPKDLRFIPDPKAGIMIKSVKRAYHRLCLHCSVDQEGKSVLSEKFILKVRPAFKAVPVVSVSKASYLLREGEEFTVTCTIKDVSSSVYSTWKRENSQTKLQEKYNSWHHGDFNYERQATLTISSARVNDSGVFMCYANNTFGSANVTTTLEVVDKGFINIFPMINTTVFVNDGENVDLIVEYEAFPKPEHQQWIYMNRTFTDKWEDYPKSENESNIRYVSELHLTRLKGTEGGTYTFLVSNSDVNAAIAFNVYVNTKPEILTYDRLVNGMLQCVAAGFPEPTIDWYFCPGTEQRCSASVLPVDVQTLNSSGPPFGKLVVQSSIDSSAFKHNGTVECKAYNDVGKTSAYFNFAFKGNNKEQIHPHTLFTPLLIGFVIVAGMMCIIVMILTYKYLQKPMYEVQWKVVEEINGNNYVYIDPTQLPYDHKWEFPRNRLSFGKTLGAGAFGKVVEATAYGLIKSDAAMTVAVKMLKPSAHLTEREALMSELKVLSYLGNHMNIVNLLGACTIGGPTLVITEYCCYGDLLNFLRRKRDSFICSKQEDHAEAALYKNLLHSKESSCSDSTNEYMDMKPGVSYVVPTKADKRRSVRI</original>
    <variation>MSLPLSFPFLTFMVVIAKKNPLFLT</variation>
    <location>
        <begin position="1"/>
        <end position="744"/>
    </location>
</feature>
<feature type="splice variant" id="VSP_038385" description="In isoform 2." evidence="56 58 59">
    <location>
        <begin position="510"/>
        <end position="513"/>
    </location>
</feature>
<feature type="sequence variant" id="VAR_081062" description="In MASTC; uncertain significance; dbSNP:rs1060502556." evidence="39">
    <original>S</original>
    <variation>C</variation>
    <location>
        <position position="451"/>
    </location>
</feature>
<feature type="sequence variant" id="VAR_042021" description="In dbSNP:rs55792975." evidence="25">
    <original>V</original>
    <variation>I</variation>
    <location>
        <position position="532"/>
    </location>
</feature>
<feature type="sequence variant" id="VAR_081063" description="In MASTC; uncertain significance; dbSNP:rs753212327." evidence="20">
    <original>A</original>
    <variation>D</variation>
    <location>
        <position position="533"/>
    </location>
</feature>
<feature type="sequence variant" id="VAR_042022" description="In dbSNP:rs3822214." evidence="25 31">
    <original>M</original>
    <variation>L</variation>
    <location>
        <position position="541"/>
    </location>
</feature>
<feature type="sequence variant" id="VAR_061289" description="In dbSNP:rs3822214.">
    <original>M</original>
    <variation>V</variation>
    <location>
        <position position="541"/>
    </location>
</feature>
<feature type="sequence variant" id="VAR_033124" description="In GIST; somatic mutation." evidence="21 49">
    <location>
        <begin position="550"/>
        <end position="558"/>
    </location>
</feature>
<feature type="sequence variant" id="VAR_033123" description="In GIST; somatic mutation; dbSNP:rs2109775477." evidence="49">
    <original>K</original>
    <variation>I</variation>
    <location>
        <position position="550"/>
    </location>
</feature>
<feature type="sequence variant" id="VAR_033125" description="In GIST; somatic mutation; dbSNP:rs2109775521." evidence="49">
    <location>
        <begin position="551"/>
        <end position="555"/>
    </location>
</feature>
<feature type="sequence variant" id="VAR_033128" description="In GIST; somatic mutation; dbSNP:rs121913685." evidence="49">
    <location>
        <begin position="559"/>
        <end position="560"/>
    </location>
</feature>
<feature type="sequence variant" id="VAR_033126" description="In GIST; dbSNP:rs121913517." evidence="11">
    <original>V</original>
    <variation>A</variation>
    <location>
        <position position="559"/>
    </location>
</feature>
<feature type="sequence variant" id="VAR_033127" description="In GIST; somatic mutation; dbSNP:rs121913517." evidence="49">
    <original>V</original>
    <variation>D</variation>
    <location>
        <position position="559"/>
    </location>
</feature>
<feature type="sequence variant" id="VAR_007965" description="In GIST; dbSNP:rs121913685." evidence="53">
    <location>
        <position position="559"/>
    </location>
</feature>
<feature type="sequence variant" id="VAR_004104" description="In PBT; dbSNP:rs121913680." evidence="18">
    <original>E</original>
    <variation>K</variation>
    <location>
        <position position="583"/>
    </location>
</feature>
<feature type="sequence variant" id="VAR_033129" description="In PBT; dbSNP:rs28933371." evidence="10">
    <original>F</original>
    <variation>C</variation>
    <location>
        <position position="584"/>
    </location>
</feature>
<feature type="sequence variant" id="VAR_004105" description="In PBT; dbSNP:rs794726671." evidence="17">
    <original>F</original>
    <variation>L</variation>
    <location>
        <position position="584"/>
    </location>
</feature>
<feature type="sequence variant" id="VAR_033130" description="In PBT; dbSNP:rs2109779521." evidence="10">
    <original>G</original>
    <variation>R</variation>
    <location>
        <position position="601"/>
    </location>
</feature>
<feature type="sequence variant" id="VAR_033131" description="In PBT." evidence="10">
    <original>L</original>
    <variation>P</variation>
    <location>
        <position position="656"/>
    </location>
</feature>
<feature type="sequence variant" id="VAR_004106" description="In PBT; dbSNP:rs121913679." evidence="24">
    <original>G</original>
    <variation>R</variation>
    <location>
        <position position="664"/>
    </location>
</feature>
<feature type="sequence variant" id="VAR_042023" description="In dbSNP:rs35200131." evidence="25">
    <original>C</original>
    <variation>S</variation>
    <location>
        <position position="691"/>
    </location>
</feature>
<feature type="sequence variant" id="VAR_042024" description="In dbSNP:rs56094246." evidence="25">
    <original>S</original>
    <variation>N</variation>
    <location>
        <position position="715"/>
    </location>
</feature>
<feature type="sequence variant" id="VAR_042025" description="In a colorectal adenocarcinoma sample; somatic mutation; dbSNP:rs751005114." evidence="25">
    <original>D</original>
    <variation>N</variation>
    <location>
        <position position="737"/>
    </location>
</feature>
<feature type="sequence variant" id="VAR_004107" description="In PBT; dbSNP:rs1722708855." evidence="43">
    <original>R</original>
    <variation>G</variation>
    <location>
        <position position="791"/>
    </location>
</feature>
<feature type="sequence variant" id="VAR_033132" description="In PBT; with sensorineural deafness; dbSNP:rs121913684." evidence="50">
    <original>R</original>
    <variation>G</variation>
    <location>
        <position position="796"/>
    </location>
</feature>
<feature type="sequence variant" id="VAR_042026" description="In a colorectal adenocarcinoma sample; somatic mutation; dbSNP:rs145602440." evidence="25">
    <original>R</original>
    <variation>W</variation>
    <location>
        <position position="804"/>
    </location>
</feature>
<feature type="sequence variant" id="VAR_004108" description="In PBT; dbSNP:rs2109801595." evidence="43">
    <original>G</original>
    <variation>V</variation>
    <location>
        <position position="812"/>
    </location>
</feature>
<feature type="sequence variant" id="VAR_033133" description="In MASTC; sporadic case; somatic mutation; constitutively activated and is much more rapidly autophosphorylated than wild type; requires 2 nucleotide substitutions; dbSNP:rs1057519709." evidence="55">
    <original>D</original>
    <variation>F</variation>
    <location>
        <position position="816"/>
    </location>
</feature>
<feature type="sequence variant" id="VAR_033134" description="In a testicular tumor; seminoma; somatic mutation; constitutively activated; dbSNP:rs121913506." evidence="6 29 32">
    <original>D</original>
    <variation>H</variation>
    <location>
        <position position="816"/>
    </location>
</feature>
<feature type="sequence variant" id="VAR_081064" description="In MASTC; somatic mutation; constitutively activated; requires 2 nucleotide substitutions; dbSNP:rs1057519709." evidence="31">
    <original>D</original>
    <variation>I</variation>
    <location>
        <position position="816"/>
    </location>
</feature>
<feature type="sequence variant" id="VAR_004109" description="In MASTSYS, MASTC and mast cell leukemia; somatic mutation; constitutively activated; loss of interaction with MPDZ; dbSNP:rs121913507." evidence="9 26 29 30 31 37 44 55">
    <original>D</original>
    <variation>V</variation>
    <location>
        <position position="816"/>
    </location>
</feature>
<feature type="sequence variant" id="VAR_023828" description="In MASTSYS and MASTC; also found in acute myeloid leukemia and a germ cell tumor of the testis; somatic mutation; constitutively activated; dbSNP:rs121913506." evidence="22 25 31 52 55">
    <original>D</original>
    <variation>Y</variation>
    <location>
        <position position="816"/>
    </location>
</feature>
<feature type="sequence variant" id="VAR_033135" description="In mast cell disease; systemic; dbSNP:rs121913682." evidence="46">
    <original>D</original>
    <variation>G</variation>
    <location>
        <position position="820"/>
    </location>
</feature>
<feature type="sequence variant" id="VAR_081065" description="In MASTC; constitutively activated; dbSNP:rs993022333." evidence="38">
    <original>N</original>
    <variation>I</variation>
    <location>
        <position position="822"/>
    </location>
</feature>
<feature type="sequence variant" id="VAR_023829" description="In a germ cell tumor of the testis; somatic mutation; dbSNP:rs121913514." evidence="22 25">
    <original>N</original>
    <variation>K</variation>
    <location>
        <position position="822"/>
    </location>
</feature>
<feature type="sequence variant" id="VAR_023830" description="In a germ cell tumor of the testis; somatic mutation; dbSNP:rs1057519713." evidence="22 25">
    <original>A</original>
    <variation>P</variation>
    <location>
        <position position="829"/>
    </location>
</feature>
<feature type="sequence variant" id="VAR_033136" description="In MASTC; sporadic case; somatic mutation; dominant negative mutation; loss of autophosphorylation; dbSNP:rs121913509." evidence="55">
    <original>E</original>
    <variation>K</variation>
    <location>
        <position position="839"/>
    </location>
</feature>
<feature type="sequence variant" id="VAR_033137" description="In PBT; dbSNP:rs121913687." evidence="54">
    <original>T</original>
    <variation>P</variation>
    <location>
        <position position="847"/>
    </location>
</feature>
<feature type="sequence variant" id="VAR_004110" description="In PBT; severe." evidence="45">
    <location>
        <begin position="893"/>
        <end position="896"/>
    </location>
</feature>
<feature type="mutagenesis site" description="Reduces autophosphorylation in response to KITLG/SCF." evidence="27">
    <original>R</original>
    <variation>A</variation>
    <location>
        <position position="381"/>
    </location>
</feature>
<feature type="mutagenesis site" description="Reduces autophosphorylation in response to KITLG/SCF." evidence="27">
    <original>E</original>
    <variation>A</variation>
    <location>
        <position position="386"/>
    </location>
</feature>
<feature type="mutagenesis site" description="Reduction in SH2B2/APS binding. Abolishes SH2B2/APS binding; when associated with A-939." evidence="13">
    <original>I</original>
    <variation>A</variation>
    <location>
        <position position="571"/>
    </location>
</feature>
<feature type="mutagenesis site" description="Stronger interaction with MPDZ." evidence="9">
    <original>K</original>
    <variation>M</variation>
    <location>
        <position position="623"/>
    </location>
</feature>
<feature type="mutagenesis site" description="Abolishes down-regulation of kinase activity by PKC/PRKCA-mediated phosphorylation; when associated with A-746." evidence="42">
    <original>S</original>
    <variation>A</variation>
    <location>
        <position position="741"/>
    </location>
</feature>
<feature type="mutagenesis site" description="Abolishes down-regulation of kinase activity by PKC/PRKCA-mediated phosphorylation; when associated with A-741." evidence="42">
    <original>S</original>
    <variation>A</variation>
    <location>
        <position position="746"/>
    </location>
</feature>
<feature type="mutagenesis site" description="No decrease in activity. Leads to autophosphorylation at Tyr-900." evidence="32">
    <original>Y</original>
    <variation>F</variation>
    <location>
        <position position="823"/>
    </location>
</feature>
<feature type="mutagenesis site" description="Reduction in SH2B2/APS binding. Abolishes SH2B2/APS binding; when associated with A-571." evidence="13">
    <original>L</original>
    <variation>A</variation>
    <location>
        <position position="939"/>
    </location>
</feature>
<feature type="sequence conflict" description="In Ref. 10; AAH71593." evidence="60" ref="10">
    <original>L</original>
    <variation>I</variation>
    <location>
        <position position="764"/>
    </location>
</feature>
<feature type="sequence conflict" description="In Ref. 10; AAH71593." evidence="60" ref="10">
    <original>P</original>
    <variation>H</variation>
    <location>
        <position position="838"/>
    </location>
</feature>
<feature type="strand" evidence="65">
    <location>
        <begin position="38"/>
        <end position="41"/>
    </location>
</feature>
<feature type="strand" evidence="65">
    <location>
        <begin position="44"/>
        <end position="47"/>
    </location>
</feature>
<feature type="strand" evidence="65">
    <location>
        <begin position="54"/>
        <end position="59"/>
    </location>
</feature>
<feature type="strand" evidence="65">
    <location>
        <begin position="63"/>
        <end position="72"/>
    </location>
</feature>
<feature type="strand" evidence="65">
    <location>
        <begin position="75"/>
        <end position="77"/>
    </location>
</feature>
<feature type="strand" evidence="65">
    <location>
        <begin position="79"/>
        <end position="86"/>
    </location>
</feature>
<feature type="helix" evidence="76">
    <location>
        <begin position="89"/>
        <end position="91"/>
    </location>
</feature>
<feature type="strand" evidence="65">
    <location>
        <begin position="93"/>
        <end position="99"/>
    </location>
</feature>
<feature type="strand" evidence="65">
    <location>
        <begin position="104"/>
        <end position="110"/>
    </location>
</feature>
<feature type="strand" evidence="76">
    <location>
        <begin position="125"/>
        <end position="127"/>
    </location>
</feature>
<feature type="strand" evidence="65">
    <location>
        <begin position="132"/>
        <end position="134"/>
    </location>
</feature>
<feature type="strand" evidence="65">
    <location>
        <begin position="146"/>
        <end position="149"/>
    </location>
</feature>
<feature type="strand" evidence="65">
    <location>
        <begin position="151"/>
        <end position="153"/>
    </location>
</feature>
<feature type="strand" evidence="65">
    <location>
        <begin position="161"/>
        <end position="165"/>
    </location>
</feature>
<feature type="turn" evidence="65">
    <location>
        <begin position="166"/>
        <end position="168"/>
    </location>
</feature>
<feature type="strand" evidence="65">
    <location>
        <begin position="169"/>
        <end position="174"/>
    </location>
</feature>
<feature type="helix" evidence="65">
    <location>
        <begin position="177"/>
        <end position="179"/>
    </location>
</feature>
<feature type="strand" evidence="65">
    <location>
        <begin position="183"/>
        <end position="188"/>
    </location>
</feature>
<feature type="strand" evidence="76">
    <location>
        <begin position="194"/>
        <end position="196"/>
    </location>
</feature>
<feature type="strand" evidence="76">
    <location>
        <begin position="200"/>
        <end position="205"/>
    </location>
</feature>
<feature type="strand" evidence="65">
    <location>
        <begin position="213"/>
        <end position="215"/>
    </location>
</feature>
<feature type="strand" evidence="65">
    <location>
        <begin position="219"/>
        <end position="224"/>
    </location>
</feature>
<feature type="strand" evidence="65">
    <location>
        <begin position="229"/>
        <end position="239"/>
    </location>
</feature>
<feature type="strand" evidence="65">
    <location>
        <begin position="243"/>
        <end position="248"/>
    </location>
</feature>
<feature type="strand" evidence="65">
    <location>
        <begin position="258"/>
        <end position="263"/>
    </location>
</feature>
<feature type="strand" evidence="65">
    <location>
        <begin position="265"/>
        <end position="267"/>
    </location>
</feature>
<feature type="strand" evidence="65">
    <location>
        <begin position="269"/>
        <end position="279"/>
    </location>
</feature>
<feature type="turn" evidence="65">
    <location>
        <begin position="282"/>
        <end position="284"/>
    </location>
</feature>
<feature type="strand" evidence="65">
    <location>
        <begin position="286"/>
        <end position="293"/>
    </location>
</feature>
<feature type="strand" evidence="65">
    <location>
        <begin position="298"/>
        <end position="310"/>
    </location>
</feature>
<feature type="strand" evidence="70">
    <location>
        <begin position="312"/>
        <end position="319"/>
    </location>
</feature>
<feature type="strand" evidence="70">
    <location>
        <begin position="321"/>
        <end position="325"/>
    </location>
</feature>
<feature type="strand" evidence="70">
    <location>
        <begin position="331"/>
        <end position="341"/>
    </location>
</feature>
<feature type="strand" evidence="70">
    <location>
        <begin position="344"/>
        <end position="350"/>
    </location>
</feature>
<feature type="strand" evidence="70">
    <location>
        <begin position="356"/>
        <end position="364"/>
    </location>
</feature>
<feature type="strand" evidence="65">
    <location>
        <begin position="367"/>
        <end position="369"/>
    </location>
</feature>
<feature type="strand" evidence="70">
    <location>
        <begin position="372"/>
        <end position="379"/>
    </location>
</feature>
<feature type="helix" evidence="70">
    <location>
        <begin position="384"/>
        <end position="386"/>
    </location>
</feature>
<feature type="strand" evidence="70">
    <location>
        <begin position="388"/>
        <end position="395"/>
    </location>
</feature>
<feature type="strand" evidence="70">
    <location>
        <begin position="400"/>
        <end position="409"/>
    </location>
</feature>
<feature type="strand" evidence="70">
    <location>
        <begin position="411"/>
        <end position="420"/>
    </location>
</feature>
<feature type="helix" evidence="70">
    <location>
        <begin position="422"/>
        <end position="424"/>
    </location>
</feature>
<feature type="strand" evidence="70">
    <location>
        <begin position="425"/>
        <end position="434"/>
    </location>
</feature>
<feature type="strand" evidence="70">
    <location>
        <begin position="437"/>
        <end position="444"/>
    </location>
</feature>
<feature type="strand" evidence="71">
    <location>
        <begin position="445"/>
        <end position="449"/>
    </location>
</feature>
<feature type="strand" evidence="71">
    <location>
        <begin position="452"/>
        <end position="454"/>
    </location>
</feature>
<feature type="strand" evidence="70">
    <location>
        <begin position="458"/>
        <end position="462"/>
    </location>
</feature>
<feature type="strand" evidence="71">
    <location>
        <begin position="465"/>
        <end position="468"/>
    </location>
</feature>
<feature type="strand" evidence="70">
    <location>
        <begin position="472"/>
        <end position="479"/>
    </location>
</feature>
<feature type="helix" evidence="71">
    <location>
        <begin position="481"/>
        <end position="483"/>
    </location>
</feature>
<feature type="strand" evidence="70">
    <location>
        <begin position="485"/>
        <end position="494"/>
    </location>
</feature>
<feature type="strand" evidence="70">
    <location>
        <begin position="499"/>
        <end position="506"/>
    </location>
</feature>
<feature type="helix" evidence="74">
    <location>
        <begin position="550"/>
        <end position="552"/>
    </location>
</feature>
<feature type="strand" evidence="67">
    <location>
        <begin position="558"/>
        <end position="564"/>
    </location>
</feature>
<feature type="strand" evidence="67">
    <location>
        <begin position="567"/>
        <end position="570"/>
    </location>
</feature>
<feature type="helix" evidence="77">
    <location>
        <begin position="573"/>
        <end position="575"/>
    </location>
</feature>
<feature type="helix" evidence="77">
    <location>
        <begin position="580"/>
        <end position="582"/>
    </location>
</feature>
<feature type="helix" evidence="77">
    <location>
        <begin position="586"/>
        <end position="588"/>
    </location>
</feature>
<feature type="strand" evidence="77">
    <location>
        <begin position="589"/>
        <end position="597"/>
    </location>
</feature>
<feature type="strand" evidence="77">
    <location>
        <begin position="599"/>
        <end position="609"/>
    </location>
</feature>
<feature type="strand" evidence="77">
    <location>
        <begin position="611"/>
        <end position="613"/>
    </location>
</feature>
<feature type="strand" evidence="77">
    <location>
        <begin position="617"/>
        <end position="625"/>
    </location>
</feature>
<feature type="helix" evidence="72">
    <location>
        <begin position="627"/>
        <end position="629"/>
    </location>
</feature>
<feature type="helix" evidence="77">
    <location>
        <begin position="631"/>
        <end position="647"/>
    </location>
</feature>
<feature type="strand" evidence="77">
    <location>
        <begin position="656"/>
        <end position="660"/>
    </location>
</feature>
<feature type="strand" evidence="77">
    <location>
        <begin position="662"/>
        <end position="664"/>
    </location>
</feature>
<feature type="strand" evidence="77">
    <location>
        <begin position="667"/>
        <end position="671"/>
    </location>
</feature>
<feature type="strand" evidence="75">
    <location>
        <begin position="674"/>
        <end position="677"/>
    </location>
</feature>
<feature type="helix" evidence="77">
    <location>
        <begin position="678"/>
        <end position="685"/>
    </location>
</feature>
<feature type="helix" evidence="67">
    <location>
        <begin position="686"/>
        <end position="689"/>
    </location>
</feature>
<feature type="strand" evidence="66">
    <location>
        <begin position="719"/>
        <end position="721"/>
    </location>
</feature>
<feature type="helix" evidence="69">
    <location>
        <begin position="754"/>
        <end position="756"/>
    </location>
</feature>
<feature type="strand" evidence="69">
    <location>
        <begin position="757"/>
        <end position="759"/>
    </location>
</feature>
<feature type="helix" evidence="69">
    <location>
        <begin position="760"/>
        <end position="762"/>
    </location>
</feature>
<feature type="helix" evidence="77">
    <location>
        <begin position="766"/>
        <end position="785"/>
    </location>
</feature>
<feature type="strand" evidence="68">
    <location>
        <begin position="788"/>
        <end position="790"/>
    </location>
</feature>
<feature type="helix" evidence="77">
    <location>
        <begin position="795"/>
        <end position="797"/>
    </location>
</feature>
<feature type="strand" evidence="77">
    <location>
        <begin position="798"/>
        <end position="801"/>
    </location>
</feature>
<feature type="helix" evidence="77">
    <location>
        <begin position="802"/>
        <end position="804"/>
    </location>
</feature>
<feature type="strand" evidence="77">
    <location>
        <begin position="805"/>
        <end position="808"/>
    </location>
</feature>
<feature type="helix" evidence="64">
    <location>
        <begin position="812"/>
        <end position="814"/>
    </location>
</feature>
<feature type="turn" evidence="77">
    <location>
        <begin position="818"/>
        <end position="820"/>
    </location>
</feature>
<feature type="strand" evidence="77">
    <location>
        <begin position="821"/>
        <end position="824"/>
    </location>
</feature>
<feature type="strand" evidence="64">
    <location>
        <begin position="827"/>
        <end position="831"/>
    </location>
</feature>
<feature type="helix" evidence="77">
    <location>
        <begin position="833"/>
        <end position="835"/>
    </location>
</feature>
<feature type="helix" evidence="77">
    <location>
        <begin position="838"/>
        <end position="843"/>
    </location>
</feature>
<feature type="helix" evidence="77">
    <location>
        <begin position="848"/>
        <end position="863"/>
    </location>
</feature>
<feature type="turn" evidence="64">
    <location>
        <begin position="864"/>
        <end position="866"/>
    </location>
</feature>
<feature type="strand" evidence="73">
    <location>
        <begin position="869"/>
        <end position="872"/>
    </location>
</feature>
<feature type="helix" evidence="77">
    <location>
        <begin position="877"/>
        <end position="885"/>
    </location>
</feature>
<feature type="helix" evidence="77">
    <location>
        <begin position="897"/>
        <end position="906"/>
    </location>
</feature>
<feature type="helix" evidence="77">
    <location>
        <begin position="911"/>
        <end position="913"/>
    </location>
</feature>
<feature type="helix" evidence="77">
    <location>
        <begin position="917"/>
        <end position="930"/>
    </location>
</feature>
<feature type="turn" evidence="63">
    <location>
        <begin position="931"/>
        <end position="933"/>
    </location>
</feature>
<sequence>MRGARGAWDFLCVLLLLLRVQTGSSQPSVSPGEPSPPSIHPGKSDLIVRVGDEIRLLCTDPGFVKWTFEILDETNENKQNEWITEKAEATNTGKYTCTNKHGLSNSIYVFVRDPAKLFLVDRSLYGKEDNDTLVRCPLTDPEVTNYSLKGCQGKPLPKDLRFIPDPKAGIMIKSVKRAYHRLCLHCSVDQEGKSVLSEKFILKVRPAFKAVPVVSVSKASYLLREGEEFTVTCTIKDVSSSVYSTWKRENSQTKLQEKYNSWHHGDFNYERQATLTISSARVNDSGVFMCYANNTFGSANVTTTLEVVDKGFINIFPMINTTVFVNDGENVDLIVEYEAFPKPEHQQWIYMNRTFTDKWEDYPKSENESNIRYVSELHLTRLKGTEGGTYTFLVSNSDVNAAIAFNVYVNTKPEILTYDRLVNGMLQCVAAGFPEPTIDWYFCPGTEQRCSASVLPVDVQTLNSSGPPFGKLVVQSSIDSSAFKHNGTVECKAYNDVGKTSAYFNFAFKGNNKEQIHPHTLFTPLLIGFVIVAGMMCIIVMILTYKYLQKPMYEVQWKVVEEINGNNYVYIDPTQLPYDHKWEFPRNRLSFGKTLGAGAFGKVVEATAYGLIKSDAAMTVAVKMLKPSAHLTEREALMSELKVLSYLGNHMNIVNLLGACTIGGPTLVITEYCCYGDLLNFLRRKRDSFICSKQEDHAEAALYKNLLHSKESSCSDSTNEYMDMKPGVSYVVPTKADKRRSVRIGSYIERDVTPAIMEDDELALDLEDLLSFSYQVAKGMAFLASKNCIHRDLAARNILLTHGRITKICDFGLARDIKNDSNYVVKGNARLPVKWMAPESIFNCVYTFESDVWSYGIFLWELFSLGSSPYPGMPVDSKFYKMIKEGFRMLSPEHAPAEMYDIMKTCWDADPLKRPTFKQIVQLIEKQISESTNHIYSNLANCSPNRQKPVVDHSVRINSVGSTASSSQPLLVHDDV</sequence>
<protein>
    <recommendedName>
        <fullName>Mast/stem cell growth factor receptor Kit</fullName>
        <shortName>SCFR</shortName>
        <ecNumber>2.7.10.1</ecNumber>
    </recommendedName>
    <alternativeName>
        <fullName>Piebald trait protein</fullName>
        <shortName>PBT</shortName>
    </alternativeName>
    <alternativeName>
        <fullName>Proto-oncogene c-Kit</fullName>
    </alternativeName>
    <alternativeName>
        <fullName>Tyrosine-protein kinase Kit</fullName>
    </alternativeName>
    <alternativeName>
        <fullName>p145 c-kit</fullName>
    </alternativeName>
    <alternativeName>
        <fullName>v-kit Hardy-Zuckerman 4 feline sarcoma viral oncogene homolog</fullName>
    </alternativeName>
    <cdAntigenName>CD117</cdAntigenName>
</protein>
<proteinExistence type="evidence at protein level"/>
<keyword id="KW-0002">3D-structure</keyword>
<keyword id="KW-0025">Alternative splicing</keyword>
<keyword id="KW-0067">ATP-binding</keyword>
<keyword id="KW-1003">Cell membrane</keyword>
<keyword id="KW-0963">Cytoplasm</keyword>
<keyword id="KW-0903">Direct protein sequencing</keyword>
<keyword id="KW-0225">Disease variant</keyword>
<keyword id="KW-1015">Disulfide bond</keyword>
<keyword id="KW-0325">Glycoprotein</keyword>
<keyword id="KW-0393">Immunoglobulin domain</keyword>
<keyword id="KW-0418">Kinase</keyword>
<keyword id="KW-0460">Magnesium</keyword>
<keyword id="KW-0472">Membrane</keyword>
<keyword id="KW-0479">Metal-binding</keyword>
<keyword id="KW-0547">Nucleotide-binding</keyword>
<keyword id="KW-0597">Phosphoprotein</keyword>
<keyword id="KW-1267">Proteomics identification</keyword>
<keyword id="KW-0656">Proto-oncogene</keyword>
<keyword id="KW-0675">Receptor</keyword>
<keyword id="KW-1185">Reference proteome</keyword>
<keyword id="KW-0677">Repeat</keyword>
<keyword id="KW-0732">Signal</keyword>
<keyword id="KW-0808">Transferase</keyword>
<keyword id="KW-0812">Transmembrane</keyword>
<keyword id="KW-1133">Transmembrane helix</keyword>
<keyword id="KW-0829">Tyrosine-protein kinase</keyword>
<keyword id="KW-0832">Ubl conjugation</keyword>
<comment type="function">
    <text evidence="8 13 14 16 28 30 36 37 41 51">Tyrosine-protein kinase that acts as a cell-surface receptor for the cytokine KITLG/SCF and plays an essential role in the regulation of cell survival and proliferation, hematopoiesis, stem cell maintenance, gametogenesis, mast cell development, migration and function, and in melanogenesis. In response to KITLG/SCF binding, KIT can activate several signaling pathways. Phosphorylates PIK3R1, PLCG1, SH2B2/APS and CBL. Activates the AKT1 signaling pathway by phosphorylation of PIK3R1, the regulatory subunit of phosphatidylinositol 3-kinase. Activated KIT also transmits signals via GRB2 and activation of RAS, RAF1 and the MAP kinases MAPK1/ERK2 and/or MAPK3/ERK1. Promotes activation of STAT family members STAT1, STAT3, STAT5A and STAT5B. Activation of PLCG1 leads to the production of the cellular signaling molecules diacylglycerol and inositol 1,4,5-trisphosphate. KIT signaling is modulated by protein phosphatases, and by rapid internalization and degradation of the receptor. Activated KIT promotes phosphorylation of the protein phosphatases PTPN6/SHP-1 and PTPRU, and of the transcription factors STAT1, STAT3, STAT5A and STAT5B. Promotes phosphorylation of PIK3R1, CBL, CRK (isoform Crk-II), LYN, MAPK1/ERK2 and/or MAPK3/ERK1, PLCG1, SRC and SHC1.</text>
</comment>
<comment type="catalytic activity">
    <reaction evidence="5 27 29 37 40">
        <text>L-tyrosyl-[protein] + ATP = O-phospho-L-tyrosyl-[protein] + ADP + H(+)</text>
        <dbReference type="Rhea" id="RHEA:10596"/>
        <dbReference type="Rhea" id="RHEA-COMP:10136"/>
        <dbReference type="Rhea" id="RHEA-COMP:20101"/>
        <dbReference type="ChEBI" id="CHEBI:15378"/>
        <dbReference type="ChEBI" id="CHEBI:30616"/>
        <dbReference type="ChEBI" id="CHEBI:46858"/>
        <dbReference type="ChEBI" id="CHEBI:61978"/>
        <dbReference type="ChEBI" id="CHEBI:456216"/>
        <dbReference type="EC" id="2.7.10.1"/>
    </reaction>
</comment>
<comment type="activity regulation">
    <text evidence="19 29 37 41 42">Present in an inactive conformation in the absence of bound ligand. KITLG/SCF binding leads to dimerization and activation by autophosphorylation on tyrosine residues. Activity is down-regulated by PRKCA-mediated phosphorylation on serine residues. Inhibited by imatinib/STI-571 (Gleevec) and sunitinib; these compounds maintain the kinase in an inactive conformation.</text>
</comment>
<comment type="subunit">
    <text evidence="1 7 8 9 12 13 15 16 26 27 28 29 35 37 41 47 48 51">Monomer in the absence of bound KITLG/SCF. Homodimer in the presence of bound KITLG/SCF, forming a heterotetramer with two KITLG/SCF molecules. Interacts (via phosphorylated tyrosine residues) with the adapter proteins GRB2 and GRB7 (via SH2 domain), and SH2B2/APS. Interacts (via C-terminus) with MPDZ (via the tenth PDZ domain). Interacts (via phosphorylated tyrosine residues) with PIK3R1 and PIK3 catalytic subunit. Interacts (via phosphorylated tyrosine) with CRK (isoform Crk-II), FYN, SHC1 and MATK/CHK (via SH2 domain). Interacts with LYN and FES/FPS. Interacts (via phosphorylated tyrosine residues) with the protein phosphatases PTPN6/SHP-1 (via SH2 domain), PTPN11/SHP-2 (via SH2 domain) and PTPRU. Interacts with PLCG1. Interacts with DOK1 and TEC. Interacts (KITLG/SCF-bound) with IL1RL1. Interacts with IL1RAP (independent of stimulation with KITLG/SCF). A mast cell-specific KITLG/SCF-induced interleukin-33 signaling complex contains IL1RL1, IL1RAP, KIT and MYD88.</text>
</comment>
<comment type="interaction">
    <interactant intactId="EBI-1379503">
        <id>P10721</id>
    </interactant>
    <interactant intactId="EBI-375543">
        <id>P00519</id>
        <label>ABL1</label>
    </interactant>
    <organismsDiffer>false</organismsDiffer>
    <experiments>2</experiments>
</comment>
<comment type="interaction">
    <interactant intactId="EBI-1379503">
        <id>P10721</id>
    </interactant>
    <interactant intactId="EBI-1102694">
        <id>P42684</id>
        <label>ABL2</label>
    </interactant>
    <organismsDiffer>false</organismsDiffer>
    <experiments>2</experiments>
</comment>
<comment type="interaction">
    <interactant intactId="EBI-1379503">
        <id>P10721</id>
    </interactant>
    <interactant intactId="EBI-702336">
        <id>O75815</id>
        <label>BCAR3</label>
    </interactant>
    <organismsDiffer>false</organismsDiffer>
    <experiments>3</experiments>
</comment>
<comment type="interaction">
    <interactant intactId="EBI-1379503">
        <id>P10721</id>
    </interactant>
    <interactant intactId="EBI-2105445">
        <id>P51451</id>
        <label>BLK</label>
    </interactant>
    <organismsDiffer>false</organismsDiffer>
    <experiments>5</experiments>
</comment>
<comment type="interaction">
    <interactant intactId="EBI-1379503">
        <id>P10721</id>
    </interactant>
    <interactant intactId="EBI-2623522">
        <id>Q8WV28</id>
        <label>BLNK</label>
    </interactant>
    <organismsDiffer>false</organismsDiffer>
    <experiments>2</experiments>
</comment>
<comment type="interaction">
    <interactant intactId="EBI-1379503">
        <id>P10721</id>
    </interactant>
    <interactant intactId="EBI-886">
        <id>P46108</id>
        <label>CRK</label>
    </interactant>
    <organismsDiffer>false</organismsDiffer>
    <experiments>4</experiments>
</comment>
<comment type="interaction">
    <interactant intactId="EBI-1379503">
        <id>P10721</id>
    </interactant>
    <interactant intactId="EBI-1055635">
        <id>P07332</id>
        <label>FES</label>
    </interactant>
    <organismsDiffer>false</organismsDiffer>
    <experiments>2</experiments>
</comment>
<comment type="interaction">
    <interactant intactId="EBI-1379503">
        <id>P10721</id>
    </interactant>
    <interactant intactId="EBI-1383732">
        <id>P09769</id>
        <label>FGR</label>
    </interactant>
    <organismsDiffer>false</organismsDiffer>
    <experiments>2</experiments>
</comment>
<comment type="interaction">
    <interactant intactId="EBI-1379503">
        <id>P10721</id>
    </interactant>
    <interactant intactId="EBI-740418">
        <id>O75791</id>
        <label>GRAP2</label>
    </interactant>
    <organismsDiffer>false</organismsDiffer>
    <experiments>2</experiments>
</comment>
<comment type="interaction">
    <interactant intactId="EBI-1379503">
        <id>P10721</id>
    </interactant>
    <interactant intactId="EBI-401755">
        <id>P62993</id>
        <label>GRB2</label>
    </interactant>
    <organismsDiffer>false</organismsDiffer>
    <experiments>6</experiments>
</comment>
<comment type="interaction">
    <interactant intactId="EBI-1379503">
        <id>P10721</id>
    </interactant>
    <interactant intactId="EBI-970191">
        <id>Q14451</id>
        <label>GRB7</label>
    </interactant>
    <organismsDiffer>false</organismsDiffer>
    <experiments>4</experiments>
</comment>
<comment type="interaction">
    <interactant intactId="EBI-1379503">
        <id>P10721</id>
    </interactant>
    <interactant intactId="EBI-346340">
        <id>P08631</id>
        <label>HCK</label>
    </interactant>
    <organismsDiffer>false</organismsDiffer>
    <experiments>2</experiments>
</comment>
<comment type="interaction">
    <interactant intactId="EBI-1379503">
        <id>P10721</id>
    </interactant>
    <interactant intactId="EBI-3919324">
        <id>Q96JZ2</id>
        <label>HSH2D</label>
    </interactant>
    <organismsDiffer>false</organismsDiffer>
    <experiments>5</experiments>
</comment>
<comment type="interaction">
    <interactant intactId="EBI-1379503">
        <id>P10721</id>
    </interactant>
    <interactant intactId="EBI-1379527">
        <id>P21583</id>
        <label>KITLG</label>
    </interactant>
    <organismsDiffer>false</organismsDiffer>
    <experiments>2</experiments>
</comment>
<comment type="interaction">
    <interactant intactId="EBI-1379503">
        <id>P10721</id>
    </interactant>
    <interactant intactId="EBI-1348">
        <id>P06239</id>
        <label>LCK</label>
    </interactant>
    <organismsDiffer>false</organismsDiffer>
    <experiments>8</experiments>
</comment>
<comment type="interaction">
    <interactant intactId="EBI-1379503">
        <id>P10721</id>
    </interactant>
    <interactant intactId="EBI-79452">
        <id>P07948</id>
        <label>LYN</label>
    </interactant>
    <organismsDiffer>false</organismsDiffer>
    <experiments>7</experiments>
</comment>
<comment type="interaction">
    <interactant intactId="EBI-1379503">
        <id>P10721</id>
    </interactant>
    <interactant intactId="EBI-389883">
        <id>P16333</id>
        <label>NCK1</label>
    </interactant>
    <organismsDiffer>false</organismsDiffer>
    <experiments>3</experiments>
</comment>
<comment type="interaction">
    <interactant intactId="EBI-1379503">
        <id>P10721</id>
    </interactant>
    <interactant intactId="EBI-713635">
        <id>O43639</id>
        <label>NCK2</label>
    </interactant>
    <organismsDiffer>false</organismsDiffer>
    <experiments>2</experiments>
</comment>
<comment type="interaction">
    <interactant intactId="EBI-1379503">
        <id>P10721</id>
    </interactant>
    <interactant intactId="EBI-79464">
        <id>P27986</id>
        <label>PIK3R1</label>
    </interactant>
    <organismsDiffer>false</organismsDiffer>
    <experiments>19</experiments>
</comment>
<comment type="interaction">
    <interactant intactId="EBI-1379503">
        <id>P10721</id>
    </interactant>
    <interactant intactId="EBI-346930">
        <id>O00459</id>
        <label>PIK3R2</label>
    </interactant>
    <organismsDiffer>false</organismsDiffer>
    <experiments>19</experiments>
</comment>
<comment type="interaction">
    <interactant intactId="EBI-1379503">
        <id>P10721</id>
    </interactant>
    <interactant intactId="EBI-79893">
        <id>Q92569</id>
        <label>PIK3R3</label>
    </interactant>
    <organismsDiffer>false</organismsDiffer>
    <experiments>31</experiments>
</comment>
<comment type="interaction">
    <interactant intactId="EBI-1379503">
        <id>P10721</id>
    </interactant>
    <interactant intactId="EBI-79387">
        <id>P19174</id>
        <label>PLCG1</label>
    </interactant>
    <organismsDiffer>false</organismsDiffer>
    <experiments>31</experiments>
</comment>
<comment type="interaction">
    <interactant intactId="EBI-1379503">
        <id>P10721</id>
    </interactant>
    <interactant intactId="EBI-617403">
        <id>P16885</id>
        <label>PLCG2</label>
    </interactant>
    <organismsDiffer>false</organismsDiffer>
    <experiments>8</experiments>
</comment>
<comment type="interaction">
    <interactant intactId="EBI-1379503">
        <id>P10721</id>
    </interactant>
    <interactant intactId="EBI-1383632">
        <id>Q13882</id>
        <label>PTK6</label>
    </interactant>
    <organismsDiffer>false</organismsDiffer>
    <experiments>4</experiments>
</comment>
<comment type="interaction">
    <interactant intactId="EBI-1379503">
        <id>P10721</id>
    </interactant>
    <interactant intactId="EBI-297779">
        <id>Q06124</id>
        <label>PTPN11</label>
    </interactant>
    <organismsDiffer>false</organismsDiffer>
    <experiments>29</experiments>
</comment>
<comment type="interaction">
    <interactant intactId="EBI-1379503">
        <id>P10721</id>
    </interactant>
    <interactant intactId="EBI-7052301">
        <id>Q92729</id>
        <label>PTPRU</label>
    </interactant>
    <organismsDiffer>false</organismsDiffer>
    <experiments>2</experiments>
</comment>
<comment type="interaction">
    <interactant intactId="EBI-1379503">
        <id>P10721</id>
    </interactant>
    <interactant intactId="EBI-1026476">
        <id>P20936</id>
        <label>RASA1</label>
    </interactant>
    <organismsDiffer>false</organismsDiffer>
    <experiments>16</experiments>
</comment>
<comment type="interaction">
    <interactant intactId="EBI-1379503">
        <id>P10721</id>
    </interactant>
    <interactant intactId="EBI-7879749">
        <id>Q9UQQ2</id>
        <label>SH2B3</label>
    </interactant>
    <organismsDiffer>false</organismsDiffer>
    <experiments>2</experiments>
</comment>
<comment type="interaction">
    <interactant intactId="EBI-1379503">
        <id>P10721</id>
    </interactant>
    <interactant intactId="EBI-3923013">
        <id>O14796</id>
        <label>SH2D1B</label>
    </interactant>
    <organismsDiffer>false</organismsDiffer>
    <experiments>8</experiments>
</comment>
<comment type="interaction">
    <interactant intactId="EBI-1379503">
        <id>P10721</id>
    </interactant>
    <interactant intactId="EBI-490630">
        <id>Q9NP31</id>
        <label>SH2D2A</label>
    </interactant>
    <organismsDiffer>false</organismsDiffer>
    <experiments>10</experiments>
</comment>
<comment type="interaction">
    <interactant intactId="EBI-1379503">
        <id>P10721</id>
    </interactant>
    <interactant intactId="EBI-745980">
        <id>Q8N5H7</id>
        <label>SH2D3C</label>
    </interactant>
    <organismsDiffer>false</organismsDiffer>
    <experiments>4</experiments>
</comment>
<comment type="interaction">
    <interactant intactId="EBI-1379503">
        <id>P10721</id>
    </interactant>
    <interactant intactId="EBI-727062">
        <id>P78314</id>
        <label>SH3BP2</label>
    </interactant>
    <organismsDiffer>false</organismsDiffer>
    <experiments>3</experiments>
</comment>
<comment type="interaction">
    <interactant intactId="EBI-1379503">
        <id>P10721</id>
    </interactant>
    <interactant intactId="EBI-4402156">
        <id>Q15464</id>
        <label>SHB</label>
    </interactant>
    <organismsDiffer>false</organismsDiffer>
    <experiments>2</experiments>
</comment>
<comment type="interaction">
    <interactant intactId="EBI-1379503">
        <id>P10721</id>
    </interactant>
    <interactant intactId="EBI-78835">
        <id>P29353</id>
        <label>SHC1</label>
    </interactant>
    <organismsDiffer>false</organismsDiffer>
    <experiments>8</experiments>
</comment>
<comment type="interaction">
    <interactant intactId="EBI-1379503">
        <id>P10721</id>
    </interactant>
    <interactant intactId="EBI-7256023">
        <id>P98077</id>
        <label>SHC2</label>
    </interactant>
    <organismsDiffer>false</organismsDiffer>
    <experiments>5</experiments>
</comment>
<comment type="interaction">
    <interactant intactId="EBI-1379503">
        <id>P10721</id>
    </interactant>
    <interactant intactId="EBI-79084">
        <id>Q92529</id>
        <label>SHC3</label>
    </interactant>
    <organismsDiffer>false</organismsDiffer>
    <experiments>3</experiments>
</comment>
<comment type="interaction">
    <interactant intactId="EBI-1379503">
        <id>P10721</id>
    </interactant>
    <interactant intactId="EBI-1222854">
        <id>Q9H6Q3</id>
        <label>SLA2</label>
    </interactant>
    <organismsDiffer>false</organismsDiffer>
    <experiments>2</experiments>
</comment>
<comment type="interaction">
    <interactant intactId="EBI-1379503">
        <id>P10721</id>
    </interactant>
    <interactant intactId="EBI-617737">
        <id>O14508</id>
        <label>SOCS2</label>
    </interactant>
    <organismsDiffer>false</organismsDiffer>
    <experiments>4</experiments>
</comment>
<comment type="interaction">
    <interactant intactId="EBI-1379503">
        <id>P10721</id>
    </interactant>
    <interactant intactId="EBI-714146">
        <id>O14543</id>
        <label>SOCS3</label>
    </interactant>
    <organismsDiffer>false</organismsDiffer>
    <experiments>3</experiments>
</comment>
<comment type="interaction">
    <interactant intactId="EBI-1379503">
        <id>P10721</id>
    </interactant>
    <interactant intactId="EBI-3929549">
        <id>O14544</id>
        <label>SOCS6</label>
    </interactant>
    <organismsDiffer>false</organismsDiffer>
    <experiments>12</experiments>
</comment>
<comment type="interaction">
    <interactant intactId="EBI-1379503">
        <id>P10721</id>
    </interactant>
    <interactant intactId="EBI-621482">
        <id>P12931</id>
        <label>SRC</label>
    </interactant>
    <organismsDiffer>false</organismsDiffer>
    <experiments>5</experiments>
</comment>
<comment type="interaction">
    <interactant intactId="EBI-1379503">
        <id>P10721</id>
    </interactant>
    <interactant intactId="EBI-6083058">
        <id>Q9ULZ2</id>
        <label>STAP1</label>
    </interactant>
    <organismsDiffer>false</organismsDiffer>
    <experiments>3</experiments>
</comment>
<comment type="interaction">
    <interactant intactId="EBI-1379503">
        <id>P10721</id>
    </interactant>
    <interactant intactId="EBI-3389814">
        <id>Q9HBL0</id>
        <label>TNS1</label>
    </interactant>
    <organismsDiffer>false</organismsDiffer>
    <experiments>2</experiments>
</comment>
<comment type="interaction">
    <interactant intactId="EBI-1379503">
        <id>P10721</id>
    </interactant>
    <interactant intactId="EBI-949753">
        <id>Q63HR2</id>
        <label>TNS2</label>
    </interactant>
    <organismsDiffer>false</organismsDiffer>
    <experiments>2</experiments>
</comment>
<comment type="interaction">
    <interactant intactId="EBI-1379503">
        <id>P10721</id>
    </interactant>
    <interactant intactId="EBI-1220488">
        <id>Q68CZ2</id>
        <label>TNS3</label>
    </interactant>
    <organismsDiffer>false</organismsDiffer>
    <experiments>5</experiments>
</comment>
<comment type="interaction">
    <interactant intactId="EBI-1379503">
        <id>P10721</id>
    </interactant>
    <interactant intactId="EBI-7877438">
        <id>P42681</id>
        <label>TXK</label>
    </interactant>
    <organismsDiffer>false</organismsDiffer>
    <experiments>3</experiments>
</comment>
<comment type="interaction">
    <interactant intactId="EBI-1379503">
        <id>P10721</id>
    </interactant>
    <interactant intactId="EBI-515331">
        <id>P07947</id>
        <label>YES1</label>
    </interactant>
    <organismsDiffer>false</organismsDiffer>
    <experiments>7</experiments>
</comment>
<comment type="interaction">
    <interactant intactId="EBI-1379503">
        <id>P10721</id>
    </interactant>
    <interactant intactId="EBI-1211276">
        <id>P43403</id>
        <label>ZAP70</label>
    </interactant>
    <organismsDiffer>false</organismsDiffer>
    <experiments>2</experiments>
</comment>
<comment type="interaction">
    <interactant intactId="EBI-1379503">
        <id>P10721</id>
    </interactant>
    <interactant intactId="EBI-8026435">
        <id>Q8VBX6</id>
        <label>Mpdz</label>
    </interactant>
    <organismsDiffer>true</organismsDiffer>
    <experiments>4</experiments>
</comment>
<comment type="interaction">
    <interactant intactId="EBI-1379503">
        <id>P10721</id>
    </interactant>
    <interactant intactId="EBI-397236">
        <id>P35235</id>
        <label>Ptpn11</label>
    </interactant>
    <organismsDiffer>true</organismsDiffer>
    <experiments>2</experiments>
</comment>
<comment type="subcellular location">
    <molecule>Isoform 1</molecule>
    <subcellularLocation>
        <location>Cell membrane</location>
        <topology>Single-pass type I membrane protein</topology>
    </subcellularLocation>
</comment>
<comment type="subcellular location">
    <molecule>Isoform 2</molecule>
    <subcellularLocation>
        <location>Cell membrane</location>
        <topology>Single-pass type I membrane protein</topology>
    </subcellularLocation>
</comment>
<comment type="subcellular location">
    <molecule>Isoform 3</molecule>
    <subcellularLocation>
        <location evidence="33">Cytoplasm</location>
    </subcellularLocation>
    <text evidence="33">Detected in the cytoplasm of spermatozoa, especially in the equatorial and subacrosomal region of the sperm head.</text>
</comment>
<comment type="alternative products">
    <event type="alternative splicing"/>
    <isoform>
        <id>P10721-1</id>
        <name>1</name>
        <name>GNNK(+)</name>
        <name>KitA(+)</name>
        <sequence type="displayed"/>
    </isoform>
    <isoform>
        <id>P10721-2</id>
        <name>2</name>
        <name>GNNK(-)</name>
        <name>Kit(+)</name>
        <sequence type="described" ref="VSP_038385"/>
    </isoform>
    <isoform>
        <id>P10721-4</id>
        <name>3</name>
        <name evidence="57">TR-KIT</name>
        <sequence type="described" ref="VSP_060976"/>
    </isoform>
</comment>
<comment type="tissue specificity">
    <molecule>Isoform 3</molecule>
    <text evidence="33">In testis, detected in spermatogonia in the basal layer and in interstitial Leydig cells but not in Sertoli cells or spermatocytes inside the seminiferous tubules (at protein level) (PubMed:20601678). Expression is maintained in ejaculated spermatozoa (at protein level) (PubMed:20601678).</text>
</comment>
<comment type="induction">
    <text evidence="34">Up-regulated by cis-retinoic acid in neuroblastoma cell lines.</text>
</comment>
<comment type="PTM">
    <text evidence="28 30">Ubiquitinated by SOCS6. KIT is rapidly ubiquitinated after autophosphorylation induced by KITLG/SCF binding, leading to internalization and degradation.</text>
</comment>
<comment type="PTM">
    <text evidence="7 15 30 32 35 47">Autophosphorylated on tyrosine residues. KITLG/SCF binding enhances autophosphorylation. Isoform 1 shows low levels of tyrosine phosphorylation in the absence of added KITLG/SCF (in vitro). Kinase activity is down-regulated by phosphorylation on serine residues by protein kinase C family members. Phosphorylation at Tyr-568 is required for interaction with PTPN11/SHP-2, CRK (isoform Crk-II) and members of the SRC tyrosine-protein kinase family. Phosphorylation at Tyr-570 is required for interaction with PTPN6/SHP-1. Phosphorylation at Tyr-703, Tyr-823 and Tyr-936 is important for interaction with GRB2. Phosphorylation at Tyr-721 is important for interaction with PIK3R1. Phosphorylation at Tyr-823 and Tyr-936 is important for interaction with GRB7.</text>
</comment>
<comment type="disease" evidence="10 17 18 24 43 45 50 54">
    <disease id="DI-02164">
        <name>Piebald trait</name>
        <acronym>PBT</acronym>
        <description>Autosomal dominant genetic developmental abnormality of pigmentation characterized by congenital patches of white skin and hair that lack melanocytes.</description>
        <dbReference type="MIM" id="172800"/>
    </disease>
    <text>The disease is caused by variants affecting the gene represented in this entry.</text>
</comment>
<comment type="disease" evidence="11 21 49 53">
    <disease id="DI-01646">
        <name>Gastrointestinal stromal tumor</name>
        <acronym>GIST</acronym>
        <description>Common mesenchymal neoplasms arising in the gastrointestinal tract, most often in the stomach. They are histologically, immunohistochemically, and genetically different from typical leiomyomas, leiomyosarcomas, and schwannomas. Most GISTs are composed of a fairly uniform population of spindle-shaped cells. Some tumors are dominated by epithelioid cells or contain a mixture of spindle and epithelioid morphologies. Primary GISTs in the gastrointestinal tract commonly metastasize in the omentum and mesenteries, often as multiple nodules. However, primary tumors may also occur outside of the gastrointestinal tract, in other intra-abdominal locations, especially in the omentum and mesentery.</description>
        <dbReference type="MIM" id="606764"/>
    </disease>
    <text>The gene represented in this entry is involved in disease pathogenesis.</text>
</comment>
<comment type="disease">
    <disease id="DI-02749">
        <name>Testicular germ cell tumor</name>
        <acronym>TGCT</acronym>
        <description>A common malignancy in males representing 95% of all testicular neoplasms. TGCTs have various pathologic subtypes including: unclassified intratubular germ cell neoplasia, seminoma (including cases with syncytiotrophoblastic cells), spermatocytic seminoma, embryonal carcinoma, yolk sac tumor, choriocarcinoma, and teratoma.</description>
        <dbReference type="MIM" id="273300"/>
    </disease>
    <text>The gene represented in this entry may be involved in disease pathogenesis.</text>
</comment>
<comment type="disease">
    <disease id="DI-01171">
        <name>Leukemia, acute myelogenous</name>
        <acronym>AML</acronym>
        <description>A subtype of acute leukemia, a cancer of the white blood cells. AML is a malignant disease of bone marrow characterized by maturational arrest of hematopoietic precursors at an early stage of development. Clonal expansion of myeloid blasts occurs in bone marrow, blood, and other tissue. Myelogenous leukemias develop from changes in cells that normally produce neutrophils, basophils, eosinophils and monocytes.</description>
        <dbReference type="MIM" id="601626"/>
    </disease>
    <text>The gene represented in this entry is involved in disease pathogenesis. Somatic mutations that lead to constitutive activation of KIT are detected in AML patients. These mutations fall into two classes, the most common being in-frame internal tandem duplications of variable length in the juxtamembrane region that disrupt the normal regulation of the kinase activity. Likewise, point mutations in the kinase domain can result in a constitutively activated kinase.</text>
</comment>
<comment type="disease" evidence="20 31 38 39 55">
    <disease id="DI-05277">
        <name>Mastocytosis, cutaneous</name>
        <acronym>MASTC</acronym>
        <description>A form of mastocytosis, a heterogeneous group of disorders associated with abnormal proliferation and accumulation of mast cells in various tissues, especially in the skin and hematopoietic organs. MASTC is an autosomal dominant form characterized by macules, papules, nodules, or diffuse infiltration of the skin, often associated with localized hyperpigmentation. Gentle rubbing of the lesions induces histamine release from mechanically activated mast cells, causing local wheals, erythema, and often pruritus, a phenomenon termed Darier sign.</description>
        <dbReference type="MIM" id="154800"/>
    </disease>
    <text>The disease is caused by variants affecting the gene represented in this entry.</text>
</comment>
<comment type="disease" evidence="55">
    <disease id="DI-05278">
        <name>Mastocytosis, systemic</name>
        <acronym>MASTSYS</acronym>
        <description>A severe form of mastocytosis characterized by abnormal proliferation and accumulation of mast cells in several organs, resulting in a systemic disease that may affect bone, gastrointestinal tract, lymphatics, spleen, and liver. In some cases, it is associated with a clonal hematologic non-mast-cell lineage disease, such as a myelodysplastic or myeloproliferative disorder. It can also lead to mast cell leukemia, which carries a high risk of mortality.</description>
        <dbReference type="MIM" id="154800"/>
    </disease>
    <text>The disease is caused by variants affecting the gene represented in this entry.</text>
</comment>
<comment type="miscellaneous">
    <text>Numerous proteins are phosphorylated in response to KIT signaling, but it is not evident to determine which are directly phosphorylated by KIT under in vivo conditions.</text>
</comment>
<comment type="similarity">
    <text evidence="4">Belongs to the protein kinase superfamily. Tyr protein kinase family. CSF-1/PDGF receptor subfamily.</text>
</comment>
<comment type="sequence caution" evidence="60">
    <conflict type="miscellaneous discrepancy">
        <sequence resource="EMBL-CDS" id="ACF47630"/>
    </conflict>
    <text>Probable cloning artifact.</text>
</comment>
<comment type="online information" name="Atlas of Genetics and Cytogenetics in Oncology and Haematology">
    <link uri="https://atlasgeneticsoncology.org/gene/127/KIT"/>
</comment>
<comment type="online information" name="Wikipedia">
    <link uri="https://en.wikipedia.org/wiki/CD117"/>
    <text>CD117 entry</text>
</comment>
<comment type="online information" name="Protein Spotlight">
    <link uri="https://www.proteinspotlight.org/back_issues/163/"/>
    <text>two's company - Issue 163 of August 2014</text>
</comment>
<accession>P10721</accession>
<accession>B5A956</accession>
<accession>D5LXN2</accession>
<accession>D5M931</accession>
<accession>F5H8F8</accession>
<accession>Q6IQ28</accession>
<accession>Q99662</accession>
<accession>Q9UM99</accession>
<name>KIT_HUMAN</name>
<reference key="1">
    <citation type="journal article" date="1987" name="EMBO J.">
        <title>Human proto-oncogene c-kit: a new cell surface receptor tyrosine kinase for an unidentified ligand.</title>
        <authorList>
            <person name="Yarden Y."/>
            <person name="Kuang W.-J."/>
            <person name="Yang-Feng T."/>
            <person name="Coussens L."/>
            <person name="Munemitsu S."/>
            <person name="Dull T.J."/>
            <person name="Chen E."/>
            <person name="Schlessinger J."/>
            <person name="Francke U."/>
            <person name="Ullrich A."/>
        </authorList>
    </citation>
    <scope>NUCLEOTIDE SEQUENCE [MRNA] (ISOFORM 1)</scope>
    <scope>CATALYTIC ACTIVITY</scope>
    <scope>AUTOPHOSPHORYLATION</scope>
    <scope>SUBCELLULAR LOCATION</scope>
    <source>
        <tissue>Fetal brain</tissue>
        <tissue>Term placenta</tissue>
    </source>
</reference>
<reference key="2">
    <citation type="journal article" date="1992" name="Oncogene">
        <title>Organization and nucleotide sequence of the human KIT (mast/stem cell growth factor receptor) proto-oncogene.</title>
        <authorList>
            <person name="Giebel L.B."/>
            <person name="Strunk K.M."/>
            <person name="Holmes S.A."/>
            <person name="Spritz R.A."/>
        </authorList>
    </citation>
    <scope>NUCLEOTIDE SEQUENCE [GENOMIC DNA]</scope>
    <scope>ALTERNATIVE SPLICING (ISOFORMS 1 AND 2)</scope>
</reference>
<reference key="3">
    <citation type="journal article" date="1994" name="Cancer Res.">
        <title>Complementary DNA cloning and characterization of truncated form of c-kit in human colon carcinoma cells.</title>
        <authorList>
            <person name="Toyota M."/>
            <person name="Hinoda Y."/>
            <person name="Itoh F."/>
            <person name="Takaoka A."/>
            <person name="Imai K."/>
            <person name="Yachi A."/>
        </authorList>
    </citation>
    <scope>NUCLEOTIDE SEQUENCE [MRNA] (ISOFORM 3)</scope>
    <source>
        <tissue>Colon carcinoma</tissue>
    </source>
</reference>
<reference key="4">
    <citation type="journal article" date="1997" name="Genomics">
        <title>Sequence analysis of two genomic regions containing the KIT and the FMS receptor tyrosine kinase genes.</title>
        <authorList>
            <person name="Andre C."/>
            <person name="Hampe A."/>
            <person name="Lachaume P."/>
            <person name="Martin E."/>
            <person name="Wang X.P."/>
            <person name="Manus V."/>
            <person name="Hu W.X."/>
            <person name="Galibert F."/>
        </authorList>
    </citation>
    <scope>NUCLEOTIDE SEQUENCE [GENOMIC DNA]</scope>
</reference>
<reference key="5">
    <citation type="journal article" date="2004" name="Am. J. Pathol.">
        <title>Expression of a truncated form of the c-Kit tyrosine kinase receptor and activation of Src kinase in human prostatic cancer.</title>
        <authorList>
            <person name="Paronetto M.P."/>
            <person name="Farini D."/>
            <person name="Sammarco I."/>
            <person name="Maturo G."/>
            <person name="Vespasiani G."/>
            <person name="Geremia R."/>
            <person name="Rossi P."/>
            <person name="Sette C."/>
        </authorList>
    </citation>
    <scope>NUCLEOTIDE SEQUENCE [MRNA] (ISOFORM 3)</scope>
    <source>
        <tissue>Prostate cancer</tissue>
    </source>
</reference>
<reference key="6">
    <citation type="journal article" date="2010" name="Pediatr. Blood Cancer">
        <title>Retinoic acid enhances sensitivity of neuroblastoma cells for imatinib mesylate.</title>
        <authorList>
            <person name="Neumann I."/>
            <person name="Foell J.L."/>
            <person name="Bremer M."/>
            <person name="Volkmer I."/>
            <person name="Korholz D."/>
            <person name="Burdach S."/>
            <person name="Staege M.S."/>
        </authorList>
    </citation>
    <scope>NUCLEOTIDE SEQUENCE [MRNA] (ISOFORM 2)</scope>
    <scope>SUBCELLULAR LOCATION</scope>
    <scope>INDUCTION</scope>
</reference>
<reference key="7">
    <citation type="submission" date="2010-03" db="EMBL/GenBank/DDBJ databases">
        <title>Sequence of KIT mRNA from all-trans retinoic acid treated neuroblastoma cell lines.</title>
        <authorList>
            <person name="Staege M.S."/>
            <person name="Neumann I."/>
            <person name="Volkmer I."/>
        </authorList>
    </citation>
    <scope>NUCLEOTIDE SEQUENCE [MRNA] (ISOFORM 2)</scope>
</reference>
<reference key="8">
    <citation type="journal article" date="2004" name="Nat. Genet.">
        <title>Complete sequencing and characterization of 21,243 full-length human cDNAs.</title>
        <authorList>
            <person name="Ota T."/>
            <person name="Suzuki Y."/>
            <person name="Nishikawa T."/>
            <person name="Otsuki T."/>
            <person name="Sugiyama T."/>
            <person name="Irie R."/>
            <person name="Wakamatsu A."/>
            <person name="Hayashi K."/>
            <person name="Sato H."/>
            <person name="Nagai K."/>
            <person name="Kimura K."/>
            <person name="Makita H."/>
            <person name="Sekine M."/>
            <person name="Obayashi M."/>
            <person name="Nishi T."/>
            <person name="Shibahara T."/>
            <person name="Tanaka T."/>
            <person name="Ishii S."/>
            <person name="Yamamoto J."/>
            <person name="Saito K."/>
            <person name="Kawai Y."/>
            <person name="Isono Y."/>
            <person name="Nakamura Y."/>
            <person name="Nagahari K."/>
            <person name="Murakami K."/>
            <person name="Yasuda T."/>
            <person name="Iwayanagi T."/>
            <person name="Wagatsuma M."/>
            <person name="Shiratori A."/>
            <person name="Sudo H."/>
            <person name="Hosoiri T."/>
            <person name="Kaku Y."/>
            <person name="Kodaira H."/>
            <person name="Kondo H."/>
            <person name="Sugawara M."/>
            <person name="Takahashi M."/>
            <person name="Kanda K."/>
            <person name="Yokoi T."/>
            <person name="Furuya T."/>
            <person name="Kikkawa E."/>
            <person name="Omura Y."/>
            <person name="Abe K."/>
            <person name="Kamihara K."/>
            <person name="Katsuta N."/>
            <person name="Sato K."/>
            <person name="Tanikawa M."/>
            <person name="Yamazaki M."/>
            <person name="Ninomiya K."/>
            <person name="Ishibashi T."/>
            <person name="Yamashita H."/>
            <person name="Murakawa K."/>
            <person name="Fujimori K."/>
            <person name="Tanai H."/>
            <person name="Kimata M."/>
            <person name="Watanabe M."/>
            <person name="Hiraoka S."/>
            <person name="Chiba Y."/>
            <person name="Ishida S."/>
            <person name="Ono Y."/>
            <person name="Takiguchi S."/>
            <person name="Watanabe S."/>
            <person name="Yosida M."/>
            <person name="Hotuta T."/>
            <person name="Kusano J."/>
            <person name="Kanehori K."/>
            <person name="Takahashi-Fujii A."/>
            <person name="Hara H."/>
            <person name="Tanase T.-O."/>
            <person name="Nomura Y."/>
            <person name="Togiya S."/>
            <person name="Komai F."/>
            <person name="Hara R."/>
            <person name="Takeuchi K."/>
            <person name="Arita M."/>
            <person name="Imose N."/>
            <person name="Musashino K."/>
            <person name="Yuuki H."/>
            <person name="Oshima A."/>
            <person name="Sasaki N."/>
            <person name="Aotsuka S."/>
            <person name="Yoshikawa Y."/>
            <person name="Matsunawa H."/>
            <person name="Ichihara T."/>
            <person name="Shiohata N."/>
            <person name="Sano S."/>
            <person name="Moriya S."/>
            <person name="Momiyama H."/>
            <person name="Satoh N."/>
            <person name="Takami S."/>
            <person name="Terashima Y."/>
            <person name="Suzuki O."/>
            <person name="Nakagawa S."/>
            <person name="Senoh A."/>
            <person name="Mizoguchi H."/>
            <person name="Goto Y."/>
            <person name="Shimizu F."/>
            <person name="Wakebe H."/>
            <person name="Hishigaki H."/>
            <person name="Watanabe T."/>
            <person name="Sugiyama A."/>
            <person name="Takemoto M."/>
            <person name="Kawakami B."/>
            <person name="Yamazaki M."/>
            <person name="Watanabe K."/>
            <person name="Kumagai A."/>
            <person name="Itakura S."/>
            <person name="Fukuzumi Y."/>
            <person name="Fujimori Y."/>
            <person name="Komiyama M."/>
            <person name="Tashiro H."/>
            <person name="Tanigami A."/>
            <person name="Fujiwara T."/>
            <person name="Ono T."/>
            <person name="Yamada K."/>
            <person name="Fujii Y."/>
            <person name="Ozaki K."/>
            <person name="Hirao M."/>
            <person name="Ohmori Y."/>
            <person name="Kawabata A."/>
            <person name="Hikiji T."/>
            <person name="Kobatake N."/>
            <person name="Inagaki H."/>
            <person name="Ikema Y."/>
            <person name="Okamoto S."/>
            <person name="Okitani R."/>
            <person name="Kawakami T."/>
            <person name="Noguchi S."/>
            <person name="Itoh T."/>
            <person name="Shigeta K."/>
            <person name="Senba T."/>
            <person name="Matsumura K."/>
            <person name="Nakajima Y."/>
            <person name="Mizuno T."/>
            <person name="Morinaga M."/>
            <person name="Sasaki M."/>
            <person name="Togashi T."/>
            <person name="Oyama M."/>
            <person name="Hata H."/>
            <person name="Watanabe M."/>
            <person name="Komatsu T."/>
            <person name="Mizushima-Sugano J."/>
            <person name="Satoh T."/>
            <person name="Shirai Y."/>
            <person name="Takahashi Y."/>
            <person name="Nakagawa K."/>
            <person name="Okumura K."/>
            <person name="Nagase T."/>
            <person name="Nomura N."/>
            <person name="Kikuchi H."/>
            <person name="Masuho Y."/>
            <person name="Yamashita R."/>
            <person name="Nakai K."/>
            <person name="Yada T."/>
            <person name="Nakamura Y."/>
            <person name="Ohara O."/>
            <person name="Isogai T."/>
            <person name="Sugano S."/>
        </authorList>
    </citation>
    <scope>NUCLEOTIDE SEQUENCE [LARGE SCALE MRNA] (ISOFORM 2)</scope>
    <source>
        <tissue>Trachea</tissue>
    </source>
</reference>
<reference key="9">
    <citation type="journal article" date="2005" name="Nature">
        <title>Generation and annotation of the DNA sequences of human chromosomes 2 and 4.</title>
        <authorList>
            <person name="Hillier L.W."/>
            <person name="Graves T.A."/>
            <person name="Fulton R.S."/>
            <person name="Fulton L.A."/>
            <person name="Pepin K.H."/>
            <person name="Minx P."/>
            <person name="Wagner-McPherson C."/>
            <person name="Layman D."/>
            <person name="Wylie K."/>
            <person name="Sekhon M."/>
            <person name="Becker M.C."/>
            <person name="Fewell G.A."/>
            <person name="Delehaunty K.D."/>
            <person name="Miner T.L."/>
            <person name="Nash W.E."/>
            <person name="Kremitzki C."/>
            <person name="Oddy L."/>
            <person name="Du H."/>
            <person name="Sun H."/>
            <person name="Bradshaw-Cordum H."/>
            <person name="Ali J."/>
            <person name="Carter J."/>
            <person name="Cordes M."/>
            <person name="Harris A."/>
            <person name="Isak A."/>
            <person name="van Brunt A."/>
            <person name="Nguyen C."/>
            <person name="Du F."/>
            <person name="Courtney L."/>
            <person name="Kalicki J."/>
            <person name="Ozersky P."/>
            <person name="Abbott S."/>
            <person name="Armstrong J."/>
            <person name="Belter E.A."/>
            <person name="Caruso L."/>
            <person name="Cedroni M."/>
            <person name="Cotton M."/>
            <person name="Davidson T."/>
            <person name="Desai A."/>
            <person name="Elliott G."/>
            <person name="Erb T."/>
            <person name="Fronick C."/>
            <person name="Gaige T."/>
            <person name="Haakenson W."/>
            <person name="Haglund K."/>
            <person name="Holmes A."/>
            <person name="Harkins R."/>
            <person name="Kim K."/>
            <person name="Kruchowski S.S."/>
            <person name="Strong C.M."/>
            <person name="Grewal N."/>
            <person name="Goyea E."/>
            <person name="Hou S."/>
            <person name="Levy A."/>
            <person name="Martinka S."/>
            <person name="Mead K."/>
            <person name="McLellan M.D."/>
            <person name="Meyer R."/>
            <person name="Randall-Maher J."/>
            <person name="Tomlinson C."/>
            <person name="Dauphin-Kohlberg S."/>
            <person name="Kozlowicz-Reilly A."/>
            <person name="Shah N."/>
            <person name="Swearengen-Shahid S."/>
            <person name="Snider J."/>
            <person name="Strong J.T."/>
            <person name="Thompson J."/>
            <person name="Yoakum M."/>
            <person name="Leonard S."/>
            <person name="Pearman C."/>
            <person name="Trani L."/>
            <person name="Radionenko M."/>
            <person name="Waligorski J.E."/>
            <person name="Wang C."/>
            <person name="Rock S.M."/>
            <person name="Tin-Wollam A.-M."/>
            <person name="Maupin R."/>
            <person name="Latreille P."/>
            <person name="Wendl M.C."/>
            <person name="Yang S.-P."/>
            <person name="Pohl C."/>
            <person name="Wallis J.W."/>
            <person name="Spieth J."/>
            <person name="Bieri T.A."/>
            <person name="Berkowicz N."/>
            <person name="Nelson J.O."/>
            <person name="Osborne J."/>
            <person name="Ding L."/>
            <person name="Meyer R."/>
            <person name="Sabo A."/>
            <person name="Shotland Y."/>
            <person name="Sinha P."/>
            <person name="Wohldmann P.E."/>
            <person name="Cook L.L."/>
            <person name="Hickenbotham M.T."/>
            <person name="Eldred J."/>
            <person name="Williams D."/>
            <person name="Jones T.A."/>
            <person name="She X."/>
            <person name="Ciccarelli F.D."/>
            <person name="Izaurralde E."/>
            <person name="Taylor J."/>
            <person name="Schmutz J."/>
            <person name="Myers R.M."/>
            <person name="Cox D.R."/>
            <person name="Huang X."/>
            <person name="McPherson J.D."/>
            <person name="Mardis E.R."/>
            <person name="Clifton S.W."/>
            <person name="Warren W.C."/>
            <person name="Chinwalla A.T."/>
            <person name="Eddy S.R."/>
            <person name="Marra M.A."/>
            <person name="Ovcharenko I."/>
            <person name="Furey T.S."/>
            <person name="Miller W."/>
            <person name="Eichler E.E."/>
            <person name="Bork P."/>
            <person name="Suyama M."/>
            <person name="Torrents D."/>
            <person name="Waterston R.H."/>
            <person name="Wilson R.K."/>
        </authorList>
    </citation>
    <scope>NUCLEOTIDE SEQUENCE [LARGE SCALE GENOMIC DNA]</scope>
</reference>
<reference key="10">
    <citation type="journal article" date="2004" name="Genome Res.">
        <title>The status, quality, and expansion of the NIH full-length cDNA project: the Mammalian Gene Collection (MGC).</title>
        <authorList>
            <consortium name="The MGC Project Team"/>
        </authorList>
    </citation>
    <scope>NUCLEOTIDE SEQUENCE [LARGE SCALE MRNA] (ISOFORM 1)</scope>
    <source>
        <tissue>Brain</tissue>
    </source>
</reference>
<reference key="11">
    <citation type="journal article" date="2008" name="Arthritis Res. Ther.">
        <title>Novel splice variants derived from the receptor tyrosine kinase superfamily are potential therapeutics for rheumatoid arthritis.</title>
        <authorList>
            <person name="Jin P."/>
            <person name="Zhang J."/>
            <person name="Sumariwalla P.F."/>
            <person name="Ni I."/>
            <person name="Jorgensen B."/>
            <person name="Crawford D."/>
            <person name="Phillips S."/>
            <person name="Feldmann M."/>
            <person name="Shepard H.M."/>
            <person name="Paleolog E.M."/>
        </authorList>
    </citation>
    <scope>NUCLEOTIDE SEQUENCE [MRNA] OF 1-411 (ISOFORMS 1/2)</scope>
</reference>
<reference key="12">
    <citation type="journal article" date="1993" name="Jpn. J. Cancer Res.">
        <title>Characterization of the promoter region of the human c-kit proto-oncogene.</title>
        <authorList>
            <person name="Yamamoto K."/>
            <person name="Tojo A."/>
            <person name="Aoki N."/>
            <person name="Shibuya M."/>
        </authorList>
    </citation>
    <scope>NUCLEOTIDE SEQUENCE [GENOMIC DNA] OF 1-22</scope>
</reference>
<reference key="13">
    <citation type="journal article" date="1994" name="J. Biol. Chem.">
        <title>Modulation of Kit/stem cell factor receptor-induced signaling by protein kinase C.</title>
        <authorList>
            <person name="Blume-Jensen P."/>
            <person name="Ronnstrand L."/>
            <person name="Gout I."/>
            <person name="Waterfield M.D."/>
            <person name="Heldin C.H."/>
        </authorList>
    </citation>
    <scope>FUNCTION IN PHOSPHORYLATION OF PIK3R1; RAF1 AND MAPK1</scope>
    <scope>INTERACTION WITH GRB2; PIK3R1 AND PIK3 CATALYTIC SUBUNIT</scope>
    <scope>ACTIVITY REGULATION</scope>
    <scope>PHOSPHORYLATION</scope>
</reference>
<reference key="14">
    <citation type="journal article" date="1995" name="J. Biol. Chem.">
        <title>Identification of the major phosphorylation sites for protein kinase C in kit/stem cell factor receptor in vitro and in intact cells.</title>
        <authorList>
            <person name="Blume-Jensen P."/>
            <person name="Wernstedt C."/>
            <person name="Heldin C.H."/>
            <person name="Ronnstrand L."/>
        </authorList>
    </citation>
    <scope>PHOSPHORYLATION AT SER-741; SER-746; SER-821 AND SER-959</scope>
    <scope>ACTIVITY REGULATION</scope>
    <scope>PARTIAL PROTEIN SEQUENCE</scope>
    <scope>MUTAGENESIS OF SER-741 AND SER-746</scope>
</reference>
<reference key="15">
    <citation type="journal article" date="1997" name="J. Biol. Chem.">
        <title>Direct association of Csk homologous kinase (CHK) with the diphosphorylated site Tyr568/570 of the activated c-KIT in megakaryocytes.</title>
        <authorList>
            <person name="Price D.J."/>
            <person name="Rivnay B."/>
            <person name="Fu Y."/>
            <person name="Jiang S."/>
            <person name="Avraham S."/>
            <person name="Avraham H."/>
        </authorList>
    </citation>
    <scope>INTERACTION WITH PIK3R1; MATK/CHK; FYN AND SHC1</scope>
    <scope>PHOSPHORYLATION AT TYR-568; TYR-570 AND TYR-721</scope>
</reference>
<reference key="16">
    <citation type="journal article" date="1997" name="J. Biol. Chem.">
        <title>Lyn associates with the juxtamembrane region of c-Kit and is activated by stem cell factor in hematopoietic cell lines and normal progenitor cells.</title>
        <authorList>
            <person name="Linnekin D."/>
            <person name="DeBerry C.S."/>
            <person name="Mou S."/>
        </authorList>
    </citation>
    <scope>INTERACTION WITH LYN</scope>
</reference>
<reference key="17">
    <citation type="journal article" date="1998" name="Mol. Cell. Biol.">
        <title>SHP-1 binds and negatively modulates the c-Kit receptor by interaction with tyrosine 569 in the c-Kit juxtamembrane domain.</title>
        <authorList>
            <person name="Kozlowski M."/>
            <person name="Larose L."/>
            <person name="Lee F."/>
            <person name="Le D.M."/>
            <person name="Rottapel R."/>
            <person name="Siminovitch K.A."/>
        </authorList>
    </citation>
    <scope>INTERACTION WITH PTPN6</scope>
    <scope>AUTOPHOSPHORYLATION</scope>
    <scope>FUNCTION IN PHOSPHORYLATION OF PTPN6</scope>
</reference>
<reference key="18">
    <citation type="journal article" date="1999" name="Biochem. J.">
        <title>Identification of Tyr-703 and Tyr-936 as the primary association sites for Grb2 and Grb7 in the c-Kit/stem cell factor receptor.</title>
        <authorList>
            <person name="Thommes K."/>
            <person name="Lennartsson J."/>
            <person name="Carlberg M."/>
            <person name="Ronnstrand L."/>
        </authorList>
    </citation>
    <scope>INTERACTION WITH GRB2 AND GRB7</scope>
    <scope>PARTIAL PROTEIN SEQUENCE</scope>
    <scope>AUTOPHOSPHORYLATION</scope>
    <scope>PHOSPHORYLATION AT TYR-703 AND TYR-936</scope>
</reference>
<reference key="19">
    <citation type="journal article" date="1999" name="Blood">
        <title>The receptor protein tyrosine phosphatase, PTP-RO, is upregulated during megakaryocyte differentiation and is associated with the c-Kit receptor.</title>
        <authorList>
            <person name="Taniguchi Y."/>
            <person name="London R."/>
            <person name="Schinkmann K."/>
            <person name="Jiang S."/>
            <person name="Avraham H."/>
        </authorList>
    </citation>
    <scope>INTERACTION WITH PTPRU</scope>
    <scope>FUNCTION IN PHOSPHORYLATION OF PTPRU</scope>
</reference>
<reference key="20">
    <citation type="journal article" date="2000" name="FEBS Lett.">
        <title>The direct association of the multiple PDZ domain containing proteins (MUPP-1) with the human c-Kit C-terminus is regulated by tyrosine kinase activity.</title>
        <authorList>
            <person name="Mancini A."/>
            <person name="Koch A."/>
            <person name="Stefan M."/>
            <person name="Niemann H."/>
            <person name="Tamura T."/>
        </authorList>
    </citation>
    <scope>INTERACTION WITH MPDZ</scope>
    <scope>CHARACTERIZATION OF VARIANT VAL-816</scope>
    <scope>MUTAGENESIS OF LYS-623</scope>
</reference>
<reference key="21">
    <citation type="journal article" date="2002" name="J. Biol. Chem.">
        <title>Phosphatidylinositol 3-kinase and Src family kinases are required for phosphorylation and membrane recruitment of Dok-1 in c-Kit signaling.</title>
        <authorList>
            <person name="Liang X."/>
            <person name="Wisniewski D."/>
            <person name="Strife A."/>
            <person name="Shivakrupa R."/>
            <person name="Clarkson B."/>
            <person name="Resh M.D."/>
        </authorList>
    </citation>
    <scope>INTERACTION WITH LYN; TEC AND DOK1</scope>
</reference>
<reference key="22">
    <citation type="journal article" date="2003" name="Biochem. J.">
        <title>The adapter protein APS associates with the multifunctional docking sites Tyr-568 and Tyr-936 in c-Kit.</title>
        <authorList>
            <person name="Wollberg P."/>
            <person name="Lennartsson J."/>
            <person name="Gottfridsson E."/>
            <person name="Yoshimura A."/>
            <person name="Ronnstrand L."/>
        </authorList>
    </citation>
    <scope>INTERACTION WITH SH2B2/APS</scope>
    <scope>FUNCTION IN PHOSPHORYLATION OF SH2B2/APS</scope>
    <scope>MUTAGENESIS OF ILE-571 AND LEU-939</scope>
</reference>
<reference key="23">
    <citation type="journal article" date="2003" name="Exp. Cell Res.">
        <title>Identification of Tyr900 in the kinase domain of c-Kit as a Src-dependent phosphorylation site mediating interaction with c-Crk.</title>
        <authorList>
            <person name="Lennartsson J."/>
            <person name="Wernstedt C."/>
            <person name="Engstrom U."/>
            <person name="Hellman U."/>
            <person name="Ronnstrand L."/>
        </authorList>
    </citation>
    <scope>PHOSPHORYLATION AT SER-891 AND TYR-900</scope>
    <scope>PARTIAL PROTEIN SEQUENCE</scope>
    <scope>INTERACTION WITH CRK AND PIK3R1</scope>
    <scope>FUNCTION IN PHOSPHORYLATION OF CRK; AKT1 AND MAP KINASES</scope>
    <scope>IDENTIFICATION BY MASS SPECTROMETRY</scope>
</reference>
<reference key="24">
    <citation type="journal article" date="2003" name="J. Biol. Chem.">
        <title>Src family kinases are involved in the differential signaling from two splice forms of c-Kit.</title>
        <authorList>
            <person name="Voytyuk O."/>
            <person name="Lennartsson J."/>
            <person name="Mogi A."/>
            <person name="Caruana G."/>
            <person name="Courtneidge S."/>
            <person name="Ashman L.K."/>
            <person name="Ronnstrand L."/>
        </authorList>
    </citation>
    <scope>FUNCTION</scope>
    <scope>ALTERNATIVE SPLICING</scope>
</reference>
<reference key="25">
    <citation type="journal article" date="2005" name="J. Proteome Res.">
        <title>Human plasma N-glycoproteome analysis by immunoaffinity subtraction, hydrazide chemistry, and mass spectrometry.</title>
        <authorList>
            <person name="Liu T."/>
            <person name="Qian W.-J."/>
            <person name="Gritsenko M.A."/>
            <person name="Camp D.G. II"/>
            <person name="Monroe M.E."/>
            <person name="Moore R.J."/>
            <person name="Smith R.D."/>
        </authorList>
    </citation>
    <scope>GLYCOSYLATION [LARGE SCALE ANALYSIS] AT ASN-130</scope>
    <source>
        <tissue>Plasma</tissue>
    </source>
</reference>
<reference key="26">
    <citation type="journal article" date="2007" name="Blood">
        <title>The tyrosine kinase FES is an essential effector of KITD816V proliferation signal.</title>
        <authorList>
            <person name="Voisset E."/>
            <person name="Lopez S."/>
            <person name="Dubreuil P."/>
            <person name="De Sepulveda P."/>
        </authorList>
    </citation>
    <scope>INTERACTION WITH FES/FPS</scope>
    <scope>CHARACTERIZATION OF VARIANT VAL-816</scope>
</reference>
<reference key="27">
    <citation type="journal article" date="2007" name="Exp. Cell Res.">
        <title>Grb2 mediates negative regulation of stem cell factor receptor/c-Kit signaling by recruitment of Cbl.</title>
        <authorList>
            <person name="Sun J."/>
            <person name="Pedersen M."/>
            <person name="Bengtsson S."/>
            <person name="Ronnstrand L."/>
        </authorList>
    </citation>
    <scope>INTERACTION WITH GRB2 AND CBL</scope>
    <scope>UBIQUITINATION</scope>
    <scope>FUNCTION IN PHOSPHORYLATION OF CBL</scope>
</reference>
<reference key="28">
    <citation type="journal article" date="2009" name="J. Biol. Chem.">
        <title>The D816V mutation of c-Kit circumvents a requirement for Src family kinases in c-Kit signal transduction.</title>
        <authorList>
            <person name="Sun J."/>
            <person name="Pedersen M."/>
            <person name="Ronnstrand L."/>
        </authorList>
    </citation>
    <scope>FUNCTION IN ACTIVATION OF SIGNALING PATHWAYS AND CELL SURVIVAL</scope>
    <scope>FUNCTION IN PHOSPHORYLATION OF CBL</scope>
    <scope>PHOSPHORYLATION AT TYR-568; TYR-703; TYR-721 AND TYR-936</scope>
    <scope>UBIQUITINATION</scope>
    <scope>SUBCELLULAR LOCATION</scope>
    <scope>CHARACTERIZATION OF VARIANT VAL-816</scope>
</reference>
<reference key="29">
    <citation type="journal article" date="2009" name="Mol. Cell. Proteomics">
        <title>Large-scale proteomics analysis of the human kinome.</title>
        <authorList>
            <person name="Oppermann F.S."/>
            <person name="Gnad F."/>
            <person name="Olsen J.V."/>
            <person name="Hornberger R."/>
            <person name="Greff Z."/>
            <person name="Keri G."/>
            <person name="Mann M."/>
            <person name="Daub H."/>
        </authorList>
    </citation>
    <scope>PHOSPHORYLATION [LARGE SCALE ANALYSIS] AT SER-959</scope>
    <scope>IDENTIFICATION BY MASS SPECTROMETRY [LARGE SCALE ANALYSIS]</scope>
</reference>
<reference key="30">
    <citation type="journal article" date="2010" name="Hum. Reprod.">
        <title>Expression of a truncated form of KIT tyrosine kinase in human spermatozoa correlates with sperm DNA integrity.</title>
        <authorList>
            <person name="Muciaccia B."/>
            <person name="Sette C."/>
            <person name="Paronetto M.P."/>
            <person name="Barchi M."/>
            <person name="Pensini S."/>
            <person name="D'Agostino A."/>
            <person name="Gandini L."/>
            <person name="Geremia R."/>
            <person name="Stefanini M."/>
            <person name="Rossi P."/>
        </authorList>
    </citation>
    <scope>SUBCELLULAR LOCATION</scope>
    <scope>ALTERNATIVE SPLICING</scope>
    <scope>TISSUE SPECIFICITY</scope>
</reference>
<reference key="31">
    <citation type="journal article" date="2010" name="J. Biochem.">
        <title>Function of activation loop tyrosine phosphorylation in the mechanism of c-Kit auto-activation and its implication in sunitinib resistance.</title>
        <authorList>
            <person name="DiNitto J.P."/>
            <person name="Deshmukh G.D."/>
            <person name="Zhang Y."/>
            <person name="Jacques S.L."/>
            <person name="Coli R."/>
            <person name="Worrall J.W."/>
            <person name="Diehl W."/>
            <person name="English J.M."/>
            <person name="Wu J.C."/>
        </authorList>
    </citation>
    <scope>PHOSPHORYLATION AT TYR-547; TYR-553; TYR-703; TYR-721; TYR-730; TYR-823 AND TYR-900</scope>
    <scope>IDENTIFICATION BY MASS SPECTROMETRY</scope>
    <scope>MUTAGENESIS OF TYR-823</scope>
    <scope>CHARACTERIZATION OF VARIANT HIS-816</scope>
</reference>
<reference key="32">
    <citation type="journal article" date="2011" name="Biochem. Biophys. Res. Commun.">
        <title>Mechanism of activation of human c-KIT kinase by internal tandem duplications of the juxtamembrane domain and point mutations at aspartic acid 816.</title>
        <authorList>
            <person name="Kim S.Y."/>
            <person name="Kang J.J."/>
            <person name="Lee H.H."/>
            <person name="Kang J.J."/>
            <person name="Kim B."/>
            <person name="Kim C.G."/>
            <person name="Park T.K."/>
            <person name="Kang H."/>
        </authorList>
    </citation>
    <scope>FUNCTION</scope>
    <scope>CATALYTIC ACTIVITY</scope>
    <scope>ACTIVITY REGULATION</scope>
    <scope>AUTOPHOSPHORYLATION</scope>
    <scope>SUBUNIT</scope>
    <scope>CHARACTERIZATION OF VARIANT VAL-816</scope>
</reference>
<reference key="33">
    <citation type="journal article" date="2011" name="J. Biol. Chem.">
        <title>Mechanisms of STAT protein activation by oncogenic KIT mutants in neoplastic mast cells.</title>
        <authorList>
            <person name="Chaix A."/>
            <person name="Lopez S."/>
            <person name="Voisset E."/>
            <person name="Gros L."/>
            <person name="Dubreuil P."/>
            <person name="De Sepulveda P."/>
        </authorList>
    </citation>
    <scope>FUNCTION IN ACTIVATION AND PHOSPHORYLATION OF STAT1; STAT3; STAT5A AND STAT5B</scope>
</reference>
<reference key="34">
    <citation type="journal article" date="2004" name="Cell. Mol. Life Sci.">
        <title>Signal transduction via the stem cell factor receptor/c-Kit.</title>
        <authorList>
            <person name="Ronnstrand L."/>
        </authorList>
    </citation>
    <scope>REVIEW</scope>
</reference>
<reference key="35">
    <citation type="journal article" date="2005" name="Biochem. Biophys. Res. Commun.">
        <title>Signaling by Kit protein-tyrosine kinase--the stem cell factor receptor.</title>
        <authorList>
            <person name="Roskoski R. Jr."/>
        </authorList>
    </citation>
    <scope>REVIEW ON KIT SIGNALING</scope>
</reference>
<reference key="36">
    <citation type="journal article" date="2005" name="Stem Cells">
        <title>Normal and oncogenic forms of the receptor tyrosine kinase kit.</title>
        <authorList>
            <person name="Lennartsson J."/>
            <person name="Jelacic T."/>
            <person name="Linnekin D."/>
            <person name="Shivakrupa R."/>
        </authorList>
    </citation>
    <scope>REVIEW</scope>
</reference>
<reference key="37">
    <citation type="journal article" date="2008" name="Clin. Cancer Res.">
        <title>Regulation of hematopoietic stem cells by the steel factor/KIT signaling pathway.</title>
        <authorList>
            <person name="Kent D."/>
            <person name="Copley M."/>
            <person name="Benz C."/>
            <person name="Dykstra B."/>
            <person name="Bowie M."/>
            <person name="Eaves C."/>
        </authorList>
    </citation>
    <scope>REVIEW</scope>
</reference>
<reference key="38">
    <citation type="journal article" date="2011" name="Oncogene">
        <title>Tumor-intrinsic and -extrinsic roles of c-Kit: mast cells as the primary off-target of tyrosine kinase inhibitors.</title>
        <authorList>
            <person name="Pittoni P."/>
            <person name="Piconese S."/>
            <person name="Tripodo C."/>
            <person name="Colombo M.P."/>
        </authorList>
    </citation>
    <scope>REVIEW</scope>
</reference>
<reference key="39">
    <citation type="journal article" date="2003" name="J. Biol. Chem.">
        <title>Structure of a c-kit product complex reveals the basis for kinase transactivation.</title>
        <authorList>
            <person name="Mol C.D."/>
            <person name="Lim K.B."/>
            <person name="Sridhar V."/>
            <person name="Zou H."/>
            <person name="Chien E.Y."/>
            <person name="Sang B.C."/>
            <person name="Nowakowski J."/>
            <person name="Kassel D.B."/>
            <person name="Cronin C.N."/>
            <person name="McRee D.E."/>
        </authorList>
    </citation>
    <scope>X-RAY CRYSTALLOGRAPHY (2.9 ANGSTROMS) OF 549-931 IN COMPLEX WITH ADP AND MAGNESIUM IONS</scope>
    <scope>SUBUNIT</scope>
    <scope>PHOSPHORYLATION AT TYR-568 AND TYR-570</scope>
    <scope>IDENTIFICATION BY MASS SPECTROMETRY</scope>
</reference>
<reference key="40">
    <citation type="journal article" date="2004" name="J. Biol. Chem.">
        <title>Structural basis for the autoinhibition and STI-571 inhibition of c-Kit tyrosine kinase.</title>
        <authorList>
            <person name="Mol C.D."/>
            <person name="Dougan D.R."/>
            <person name="Schneider T.R."/>
            <person name="Skene R.J."/>
            <person name="Kraus M.L."/>
            <person name="Scheibe D.N."/>
            <person name="Snell G.P."/>
            <person name="Zou H."/>
            <person name="Sang B.C."/>
            <person name="Wilson K.P."/>
        </authorList>
    </citation>
    <scope>X-RAY CRYSTALLOGRAPHY (1.6 ANGSTROMS) OF 565-935 IN COMPLEXES WITH INHIBITOR IMATINIB AND PHOSPHATE</scope>
    <scope>ACTIVITY REGULATION</scope>
</reference>
<reference key="41">
    <citation type="journal article" date="2007" name="Cell">
        <title>Structural basis for activation of the receptor tyrosine kinase KIT by stem cell factor.</title>
        <authorList>
            <person name="Yuzawa S."/>
            <person name="Opatowsky Y."/>
            <person name="Zhang Z."/>
            <person name="Mandiyan V."/>
            <person name="Lax I."/>
            <person name="Schlessinger J."/>
        </authorList>
    </citation>
    <scope>X-RAY CRYSTALLOGRAPHY (3.0 ANGSTROMS) OF 1-519 IN COMPLEX WITH KITLG/SCF</scope>
    <scope>INTERACTION WITH KITLG/SCF</scope>
    <scope>SUBUNIT</scope>
    <scope>DISULFIDE BONDS</scope>
    <scope>CATALYTIC ACTIVITY</scope>
    <scope>AUTOPHOSPHORYLATION</scope>
    <scope>MUTAGENESIS OF ARG-381 AND GLU-386</scope>
    <scope>GLYCOSYLATION AT ASN-130; ASN-283; ASN-293; ASN-300; ASN-320; ASN-352 AND ASN-367</scope>
</reference>
<reference key="42">
    <citation type="journal article" date="2009" name="Proc. Natl. Acad. Sci. U.S.A.">
        <title>KIT kinase mutants show unique mechanisms of drug resistance to imatinib and sunitinib in gastrointestinal stromal tumor patients.</title>
        <authorList>
            <person name="Gajiwala K.S."/>
            <person name="Wu J.C."/>
            <person name="Christensen J."/>
            <person name="Deshmukh G.D."/>
            <person name="Diehl W."/>
            <person name="DiNitto J.P."/>
            <person name="English J.M."/>
            <person name="Greig M.J."/>
            <person name="He Y.A."/>
            <person name="Jacques S.L."/>
            <person name="Lunney E.A."/>
            <person name="McTigue M."/>
            <person name="Molina D."/>
            <person name="Quenzer T."/>
            <person name="Wells P.A."/>
            <person name="Yu X."/>
            <person name="Zhang Y."/>
            <person name="Zou A."/>
            <person name="Emmett M.R."/>
            <person name="Marshall A.G."/>
            <person name="Zhang H.M."/>
            <person name="Demetri G.D."/>
        </authorList>
    </citation>
    <scope>X-RAY CRYSTALLOGRAPHY (1.6 ANGSTROMS) OF 544-935 IN COMPLEX WITH SUNITINIB</scope>
    <scope>CATALYTIC ACTIVITY</scope>
    <scope>AUTOPHOSPHORYLATION</scope>
    <scope>CHARACTERIZATION OF VARIANTS HIS-816 AND VAL-816</scope>
    <scope>ACTIVITY REGULATION</scope>
</reference>
<reference key="43">
    <citation type="journal article" date="2011" name="J. Biol. Chem.">
        <title>Structural basis for c-KIT inhibition by the suppressor of cytokine signaling 6 (SOCS6) ubiquitin ligase.</title>
        <authorList>
            <person name="Zadjali F."/>
            <person name="Pike A.C."/>
            <person name="Vesterlund M."/>
            <person name="Sun J."/>
            <person name="Wu C."/>
            <person name="Li S.S."/>
            <person name="Ronnstrand L."/>
            <person name="Knapp S."/>
            <person name="Bullock A.N."/>
            <person name="Flores-Morales A."/>
        </authorList>
    </citation>
    <scope>X-RAY CRYSTALLOGRAPHY (1.45 ANGSTROMS) OF 564-574 IN COMPLEX WITH SOCS6</scope>
    <scope>PHOSPHORYLATION AT TYR-568</scope>
</reference>
<reference key="44">
    <citation type="journal article" date="1992" name="J. Clin. Invest.">
        <title>Human piebald trait resulting from a dominant negative mutant allele of the c-kit membrane receptor gene.</title>
        <authorList>
            <person name="Fleischman R.A."/>
        </authorList>
    </citation>
    <scope>VARIANT PBT LYS-583</scope>
</reference>
<reference key="45">
    <citation type="journal article" date="1992" name="Am. J. Hum. Genet.">
        <title>Dominant negative and loss of function mutations of the c-kit (mast/stem cell growth factor receptor) proto-oncogene in human piebaldism.</title>
        <authorList>
            <person name="Spritz R.A."/>
            <person name="Giebel L.B."/>
            <person name="Holmes S.A."/>
        </authorList>
    </citation>
    <scope>VARIANT PBT LEU-584</scope>
</reference>
<reference key="46">
    <citation type="journal article" date="1991" name="Proc. Natl. Acad. Sci. U.S.A.">
        <title>Mutation of the KIT (mast/stem cell growth factor receptor) protooncogene in human piebaldism.</title>
        <authorList>
            <person name="Giebel L.B."/>
            <person name="Spritz R.A."/>
        </authorList>
    </citation>
    <scope>VARIANT PBT ARG-664</scope>
</reference>
<reference key="47">
    <citation type="journal article" date="1993" name="J. Clin. Invest.">
        <title>Identification of mutations in the coding sequence of the proto-oncogene c-kit in a human mast cell leukemia cell line causing ligand-independent activation of c-kit product.</title>
        <authorList>
            <person name="Furitsu T."/>
            <person name="Tsujimura T."/>
            <person name="Tono T."/>
            <person name="Ikeda H."/>
            <person name="Kitayama H."/>
            <person name="Koshimizu U."/>
            <person name="Sugahara H."/>
            <person name="Butterfield J.H."/>
            <person name="Ashman L.K."/>
            <person name="Kanayama Y."/>
            <person name="Matsuzawa Y."/>
            <person name="Kitamura Y."/>
            <person name="Kanakura Y."/>
        </authorList>
    </citation>
    <scope>VARIANT MAST CELL LEUKEMIA VAL-816</scope>
</reference>
<reference key="48">
    <citation type="journal article" date="1993" name="J. Invest. Dermatol.">
        <title>Novel mutations of the KIT (mast/stem cell growth factor receptor) proto-oncogene in human piebaldism.</title>
        <authorList>
            <person name="Spritz R.A."/>
            <person name="Holmes S.A."/>
            <person name="Itin P."/>
            <person name="Kuester W."/>
        </authorList>
    </citation>
    <scope>VARIANTS PBT GLY-791 AND VAL-812</scope>
</reference>
<reference key="49">
    <citation type="journal article" date="1995" name="Hum. Mutat.">
        <title>A 12-bp deletion (7818del12) in the c-kit protooncogene in a large Italian kindred with piebaldism.</title>
        <authorList>
            <person name="Riva P."/>
            <person name="Milani N."/>
            <person name="Gandolfi P."/>
            <person name="Larizza L."/>
        </authorList>
    </citation>
    <scope>VARIANT PBT 893-GLU--PRO-896 DEL</scope>
</reference>
<reference key="50">
    <citation type="journal article" date="1997" name="Br. J. Haematol.">
        <title>A new c-kit mutation in a case of aggressive mast cell disease.</title>
        <authorList>
            <person name="Pignon J.-M."/>
            <person name="Giraudier S."/>
            <person name="Duquesnoy P."/>
            <person name="Jouault H."/>
            <person name="Imbert M."/>
            <person name="Vainchenker W."/>
            <person name="Vernant J.-P."/>
            <person name="Tulliez M."/>
        </authorList>
    </citation>
    <scope>VARIANT MAST CELL DISEASE GLY-820</scope>
</reference>
<reference key="51">
    <citation type="journal article" date="1998" name="Am. J. Med. Genet.">
        <title>Piebaldism with deafness: molecular evidence for an expanded syndrome.</title>
        <authorList>
            <person name="Spritz R.A."/>
            <person name="Beighton P."/>
        </authorList>
    </citation>
    <scope>VARIANT PBT GLY-796</scope>
</reference>
<reference key="52">
    <citation type="journal article" date="1998" name="Blood">
        <title>c-kit activating mutations and mast cell proliferation in human leukemia.</title>
        <authorList>
            <person name="Beghini A."/>
            <person name="Larizza L."/>
            <person name="Cairoli R."/>
            <person name="Morra E."/>
        </authorList>
    </citation>
    <scope>VARIANT ACUTE MYELOID LEUKEMIA TYR-816</scope>
</reference>
<reference key="53">
    <citation type="journal article" date="1998" name="J. Invest. Dermatol.">
        <title>A novel KIT gene missense mutation in a Japanese family with piebaldism.</title>
        <authorList>
            <person name="Nomura K."/>
            <person name="Hatayama I."/>
            <person name="Narita T."/>
            <person name="Kaneko T."/>
            <person name="Shiraishi M."/>
        </authorList>
    </citation>
    <scope>VARIANT PBT PRO-847</scope>
</reference>
<reference key="54">
    <citation type="journal article" date="1998" name="Nat. Genet.">
        <title>Familial gastrointestinal stromal tumours with germline mutation of the KIT gene.</title>
        <authorList>
            <person name="Nishida T."/>
            <person name="Hirota S."/>
            <person name="Taniguchi M."/>
            <person name="Hashimoto K."/>
            <person name="Isozaki K."/>
            <person name="Nakamura H."/>
            <person name="Kanakura Y."/>
            <person name="Tanaka T."/>
            <person name="Takabayashi A."/>
            <person name="Matsuda H."/>
            <person name="Kitamura Y."/>
        </authorList>
    </citation>
    <scope>VARIANT GIST VAL-559 DEL</scope>
</reference>
<reference key="55">
    <citation type="journal article" date="1998" name="Science">
        <title>Gain-of-function mutations of c-kit in human gastrointestinal stromal tumors.</title>
        <authorList>
            <person name="Hirota S."/>
            <person name="Isozaki K."/>
            <person name="Moriyama Y."/>
            <person name="Hashimoto K."/>
            <person name="Nishida T."/>
            <person name="Ishiguro S."/>
            <person name="Kawano K."/>
            <person name="Hanada M."/>
            <person name="Kurata A."/>
            <person name="Takeda M."/>
            <person name="Muhammad Tunio G."/>
            <person name="Matsuzawa Y."/>
            <person name="Kanakura Y."/>
            <person name="Shinomura Y."/>
            <person name="Kitamura Y."/>
        </authorList>
    </citation>
    <scope>VARIANTS GIST ILE-550; 550-LYS--LYS-558 DEL; 551-PRO--VAL-555 DEL; ASP-559 AND 559-VAL-VAL-560 DEL</scope>
</reference>
<reference key="56">
    <citation type="journal article" date="1999" name="Am. J. Pathol.">
        <title>Activating c-kit gene mutations in human germ cell tumors.</title>
        <authorList>
            <person name="Tian Q."/>
            <person name="Frierson H.F. Jr."/>
            <person name="Krystal G.W."/>
            <person name="Moskaluk C.A."/>
        </authorList>
    </citation>
    <scope>VARIANT HIS-816</scope>
    <scope>CHARACTERIZATION OF VARIANT HIS-816</scope>
</reference>
<reference key="57">
    <citation type="journal article" date="1999" name="Proc. Natl. Acad. Sci. U.S.A.">
        <title>Activating and dominant inactivating c-KIT catalytic domain mutations in distinct clinical forms of human mastocytosis.</title>
        <authorList>
            <person name="Longley B.J. Jr."/>
            <person name="Metcalfe D.D."/>
            <person name="Tharp M."/>
            <person name="Wang X."/>
            <person name="Tyrrell L."/>
            <person name="Lu S.-Z."/>
            <person name="Heitjan D."/>
            <person name="Ma Y."/>
        </authorList>
    </citation>
    <scope>VARIANTS MASTSYS VAL-816 AND TYR-816</scope>
    <scope>VARIANTS MASTC PHE-816 AND LYS-839</scope>
    <scope>CHARACTERIZATION OF VARIANTS MASTSYS VAL-816 AND TYR-816</scope>
    <scope>CHARACTERIZATION OF VARIANTS MASTC PHE-816 AND LYS-839</scope>
    <scope>INVOLVEMENT IN MASTSYS AND MASTC</scope>
</reference>
<reference key="58">
    <citation type="journal article" date="2000" name="Am. J. Med. Genet.">
        <title>Three novel mutations of the proto-oncogene KIT cause human piebaldism.</title>
        <authorList>
            <person name="Syrris P."/>
            <person name="Malik N.M."/>
            <person name="Murday V.A."/>
            <person name="Patton M.A."/>
            <person name="Carter N.D."/>
            <person name="Hughes H.E."/>
            <person name="Metcalfe K."/>
        </authorList>
    </citation>
    <scope>VARIANTS PBT CYS-584; ARG-601 AND PRO-656</scope>
</reference>
<reference key="59">
    <citation type="journal article" date="2001" name="Cancer">
        <title>Germline mutation in the juxtamembrane domain of the kit gene in a family with gastrointestinal stromal tumors and urticaria pigmentosa.</title>
        <authorList>
            <person name="Beghini A."/>
            <person name="Tibiletti M.G."/>
            <person name="Roversi G."/>
            <person name="Chiaravalli A.M."/>
            <person name="Serio G."/>
            <person name="Capella C."/>
            <person name="Larizza L."/>
        </authorList>
    </citation>
    <scope>VARIANT GIST ALA-559</scope>
</reference>
<reference key="60">
    <citation type="journal article" date="2004" name="J. Med. Genet.">
        <title>A germline mutation in KIT in familial diffuse cutaneous mastocytosis.</title>
        <authorList>
            <person name="Tang X."/>
            <person name="Boxer M."/>
            <person name="Drummond A."/>
            <person name="Ogston P."/>
            <person name="Hodgins M."/>
            <person name="Burden A.D."/>
        </authorList>
    </citation>
    <scope>VARIANT MASTC ASP-533</scope>
    <scope>INVOLVEMENT IN MASTC</scope>
</reference>
<reference key="61">
    <citation type="journal article" date="2005" name="Oncogene">
        <title>A mutation-created novel intra-exonic pre-mRNA splice site causes constitutive activation of KIT in human gastrointestinal stromal tumors.</title>
        <authorList>
            <person name="Chen L.L."/>
            <person name="Sabripour M."/>
            <person name="Wu E.F."/>
            <person name="Prieto V.G."/>
            <person name="Fuller G.N."/>
            <person name="Frazier M.L."/>
        </authorList>
    </citation>
    <scope>VARIANT GIST 550-LYS--LYS-558 DEL</scope>
</reference>
<reference key="62">
    <citation type="journal article" date="2006" name="Genes Chromosomes Cancer">
        <title>Sequence analysis of the protein kinase gene family in human testicular germ-cell tumors of adolescents and adults.</title>
        <authorList>
            <person name="Bignell G."/>
            <person name="Smith R."/>
            <person name="Hunter C."/>
            <person name="Stephens P."/>
            <person name="Davies H."/>
            <person name="Greenman C."/>
            <person name="Teague J."/>
            <person name="Butler A."/>
            <person name="Edkins S."/>
            <person name="Stevens C."/>
            <person name="O'meara S."/>
            <person name="Parker A."/>
            <person name="Avis T."/>
            <person name="Barthorpe S."/>
            <person name="Brackenbury L."/>
            <person name="Buck G."/>
            <person name="Clements J."/>
            <person name="Cole J."/>
            <person name="Dicks E."/>
            <person name="Edwards K."/>
            <person name="Forbes S."/>
            <person name="Gorton M."/>
            <person name="Gray K."/>
            <person name="Halliday K."/>
            <person name="Harrison R."/>
            <person name="Hills K."/>
            <person name="Hinton J."/>
            <person name="Jones D."/>
            <person name="Kosmidou V."/>
            <person name="Laman R."/>
            <person name="Lugg R."/>
            <person name="Menzies A."/>
            <person name="Perry J."/>
            <person name="Petty R."/>
            <person name="Raine K."/>
            <person name="Shepherd R."/>
            <person name="Small A."/>
            <person name="Solomon H."/>
            <person name="Stephens Y."/>
            <person name="Tofts C."/>
            <person name="Varian J."/>
            <person name="Webb A."/>
            <person name="West S."/>
            <person name="Widaa S."/>
            <person name="Yates A."/>
            <person name="Gillis A.J.M."/>
            <person name="Stoop H.J."/>
            <person name="van Gurp R.J.H.L.M."/>
            <person name="Oosterhuis J.W."/>
            <person name="Looijenga L.H.J."/>
            <person name="Futreal P.A."/>
            <person name="Wooster R."/>
            <person name="Stratton M.R."/>
        </authorList>
    </citation>
    <scope>VARIANTS TYR-816; LYS-822 AND PRO-829</scope>
</reference>
<reference key="63">
    <citation type="journal article" date="2007" name="Nature">
        <title>Patterns of somatic mutation in human cancer genomes.</title>
        <authorList>
            <person name="Greenman C."/>
            <person name="Stephens P."/>
            <person name="Smith R."/>
            <person name="Dalgliesh G.L."/>
            <person name="Hunter C."/>
            <person name="Bignell G."/>
            <person name="Davies H."/>
            <person name="Teague J."/>
            <person name="Butler A."/>
            <person name="Stevens C."/>
            <person name="Edkins S."/>
            <person name="O'Meara S."/>
            <person name="Vastrik I."/>
            <person name="Schmidt E.E."/>
            <person name="Avis T."/>
            <person name="Barthorpe S."/>
            <person name="Bhamra G."/>
            <person name="Buck G."/>
            <person name="Choudhury B."/>
            <person name="Clements J."/>
            <person name="Cole J."/>
            <person name="Dicks E."/>
            <person name="Forbes S."/>
            <person name="Gray K."/>
            <person name="Halliday K."/>
            <person name="Harrison R."/>
            <person name="Hills K."/>
            <person name="Hinton J."/>
            <person name="Jenkinson A."/>
            <person name="Jones D."/>
            <person name="Menzies A."/>
            <person name="Mironenko T."/>
            <person name="Perry J."/>
            <person name="Raine K."/>
            <person name="Richardson D."/>
            <person name="Shepherd R."/>
            <person name="Small A."/>
            <person name="Tofts C."/>
            <person name="Varian J."/>
            <person name="Webb T."/>
            <person name="West S."/>
            <person name="Widaa S."/>
            <person name="Yates A."/>
            <person name="Cahill D.P."/>
            <person name="Louis D.N."/>
            <person name="Goldstraw P."/>
            <person name="Nicholson A.G."/>
            <person name="Brasseur F."/>
            <person name="Looijenga L."/>
            <person name="Weber B.L."/>
            <person name="Chiew Y.-E."/>
            <person name="DeFazio A."/>
            <person name="Greaves M.F."/>
            <person name="Green A.R."/>
            <person name="Campbell P."/>
            <person name="Birney E."/>
            <person name="Easton D.F."/>
            <person name="Chenevix-Trench G."/>
            <person name="Tan M.-H."/>
            <person name="Khoo S.K."/>
            <person name="Teh B.T."/>
            <person name="Yuen S.T."/>
            <person name="Leung S.Y."/>
            <person name="Wooster R."/>
            <person name="Futreal P.A."/>
            <person name="Stratton M.R."/>
        </authorList>
    </citation>
    <scope>VARIANTS [LARGE SCALE ANALYSIS] ILE-532; LEU-541; SER-691; ASN-715; ASN-737; TRP-804; TYR-816; LYS-822 AND PRO-829</scope>
</reference>
<reference key="64">
    <citation type="journal article" date="2010" name="J. Invest. Dermatol.">
        <title>Pediatric mastocytosis is a clonal disease associated with D816V and other activating c-KIT mutations.</title>
        <authorList>
            <person name="Bodemer C."/>
            <person name="Hermine O."/>
            <person name="Palmerini F."/>
            <person name="Yang Y."/>
            <person name="Grandpeix-Guyodo C."/>
            <person name="Leventhal P.S."/>
            <person name="Hadj-Rabia S."/>
            <person name="Nasca L."/>
            <person name="Georgin-Lavialle S."/>
            <person name="Cohen-Akenine A."/>
            <person name="Launay J.M."/>
            <person name="Barete S."/>
            <person name="Feger F."/>
            <person name="Arock M."/>
            <person name="Catteau B."/>
            <person name="Sans B."/>
            <person name="Stalder J.F."/>
            <person name="Skowron F."/>
            <person name="Thomas L."/>
            <person name="Lorette G."/>
            <person name="Plantin P."/>
            <person name="Bordigoni P."/>
            <person name="Lortholary O."/>
            <person name="de Prost Y."/>
            <person name="Moussy A."/>
            <person name="Sobol H."/>
            <person name="Dubreuil P."/>
        </authorList>
    </citation>
    <scope>VARIANT LEU-541</scope>
    <scope>VARIANTS MASTC ILE-816; TYR-816 AND VAL-816</scope>
    <scope>CHARACTERIZATION OF VARIANTS MASTC ILE-816; TYR-816 AND VAL-816</scope>
</reference>
<reference key="65">
    <citation type="journal article" date="2011" name="Exp. Hematol.">
        <title>Novel, activating KIT-N822I mutation in familial cutaneous mastocytosis.</title>
        <authorList>
            <person name="Wasag B."/>
            <person name="Niedoszytko M."/>
            <person name="Piskorz A."/>
            <person name="Lange M."/>
            <person name="Renke J."/>
            <person name="Jassem E."/>
            <person name="Biernat W."/>
            <person name="Debiec-Rychter M."/>
            <person name="Limon J."/>
        </authorList>
    </citation>
    <scope>VARIANT MASTC ILE-822</scope>
    <scope>CHARACTERIZATION OF VARIANT MASTC ILE-822</scope>
    <scope>INVOLVEMENT IN MASTC</scope>
</reference>
<reference key="66">
    <citation type="journal article" date="2014" name="Clin. Exp. Dermatol.">
        <title>A new germline mutation in KIT associated with diffuse cutaneous mastocytosis in a Chinese family.</title>
        <authorList>
            <person name="Wang H.J."/>
            <person name="Lin Z.M."/>
            <person name="Zhang J."/>
            <person name="Yin J.H."/>
            <person name="Yang Y."/>
        </authorList>
    </citation>
    <scope>VARIANT MASTC CYS-451</scope>
    <scope>INVOLVEMENT IN MASTC</scope>
</reference>
<evidence type="ECO:0000250" key="1">
    <source>
        <dbReference type="UniProtKB" id="P05532"/>
    </source>
</evidence>
<evidence type="ECO:0000255" key="2"/>
<evidence type="ECO:0000255" key="3">
    <source>
        <dbReference type="PROSITE-ProRule" id="PRU00114"/>
    </source>
</evidence>
<evidence type="ECO:0000255" key="4">
    <source>
        <dbReference type="PROSITE-ProRule" id="PRU00159"/>
    </source>
</evidence>
<evidence type="ECO:0000255" key="5">
    <source>
        <dbReference type="PROSITE-ProRule" id="PRU10028"/>
    </source>
</evidence>
<evidence type="ECO:0000269" key="6">
    <source>
    </source>
</evidence>
<evidence type="ECO:0000269" key="7">
    <source>
    </source>
</evidence>
<evidence type="ECO:0000269" key="8">
    <source>
    </source>
</evidence>
<evidence type="ECO:0000269" key="9">
    <source>
    </source>
</evidence>
<evidence type="ECO:0000269" key="10">
    <source>
    </source>
</evidence>
<evidence type="ECO:0000269" key="11">
    <source>
    </source>
</evidence>
<evidence type="ECO:0000269" key="12">
    <source>
    </source>
</evidence>
<evidence type="ECO:0000269" key="13">
    <source>
    </source>
</evidence>
<evidence type="ECO:0000269" key="14">
    <source>
    </source>
</evidence>
<evidence type="ECO:0000269" key="15">
    <source>
    </source>
</evidence>
<evidence type="ECO:0000269" key="16">
    <source>
    </source>
</evidence>
<evidence type="ECO:0000269" key="17">
    <source>
    </source>
</evidence>
<evidence type="ECO:0000269" key="18">
    <source>
    </source>
</evidence>
<evidence type="ECO:0000269" key="19">
    <source>
    </source>
</evidence>
<evidence type="ECO:0000269" key="20">
    <source>
    </source>
</evidence>
<evidence type="ECO:0000269" key="21">
    <source>
    </source>
</evidence>
<evidence type="ECO:0000269" key="22">
    <source>
    </source>
</evidence>
<evidence type="ECO:0000269" key="23">
    <source>
    </source>
</evidence>
<evidence type="ECO:0000269" key="24">
    <source>
    </source>
</evidence>
<evidence type="ECO:0000269" key="25">
    <source>
    </source>
</evidence>
<evidence type="ECO:0000269" key="26">
    <source>
    </source>
</evidence>
<evidence type="ECO:0000269" key="27">
    <source>
    </source>
</evidence>
<evidence type="ECO:0000269" key="28">
    <source>
    </source>
</evidence>
<evidence type="ECO:0000269" key="29">
    <source>
    </source>
</evidence>
<evidence type="ECO:0000269" key="30">
    <source>
    </source>
</evidence>
<evidence type="ECO:0000269" key="31">
    <source>
    </source>
</evidence>
<evidence type="ECO:0000269" key="32">
    <source>
    </source>
</evidence>
<evidence type="ECO:0000269" key="33">
    <source>
    </source>
</evidence>
<evidence type="ECO:0000269" key="34">
    <source>
    </source>
</evidence>
<evidence type="ECO:0000269" key="35">
    <source>
    </source>
</evidence>
<evidence type="ECO:0000269" key="36">
    <source>
    </source>
</evidence>
<evidence type="ECO:0000269" key="37">
    <source>
    </source>
</evidence>
<evidence type="ECO:0000269" key="38">
    <source>
    </source>
</evidence>
<evidence type="ECO:0000269" key="39">
    <source>
    </source>
</evidence>
<evidence type="ECO:0000269" key="40">
    <source>
    </source>
</evidence>
<evidence type="ECO:0000269" key="41">
    <source>
    </source>
</evidence>
<evidence type="ECO:0000269" key="42">
    <source>
    </source>
</evidence>
<evidence type="ECO:0000269" key="43">
    <source>
    </source>
</evidence>
<evidence type="ECO:0000269" key="44">
    <source>
    </source>
</evidence>
<evidence type="ECO:0000269" key="45">
    <source>
    </source>
</evidence>
<evidence type="ECO:0000269" key="46">
    <source>
    </source>
</evidence>
<evidence type="ECO:0000269" key="47">
    <source>
    </source>
</evidence>
<evidence type="ECO:0000269" key="48">
    <source>
    </source>
</evidence>
<evidence type="ECO:0000269" key="49">
    <source>
    </source>
</evidence>
<evidence type="ECO:0000269" key="50">
    <source>
    </source>
</evidence>
<evidence type="ECO:0000269" key="51">
    <source>
    </source>
</evidence>
<evidence type="ECO:0000269" key="52">
    <source>
    </source>
</evidence>
<evidence type="ECO:0000269" key="53">
    <source>
    </source>
</evidence>
<evidence type="ECO:0000269" key="54">
    <source>
    </source>
</evidence>
<evidence type="ECO:0000269" key="55">
    <source>
    </source>
</evidence>
<evidence type="ECO:0000303" key="56">
    <source>
    </source>
</evidence>
<evidence type="ECO:0000303" key="57">
    <source>
    </source>
</evidence>
<evidence type="ECO:0000303" key="58">
    <source>
    </source>
</evidence>
<evidence type="ECO:0000303" key="59">
    <source ref="7"/>
</evidence>
<evidence type="ECO:0000305" key="60"/>
<evidence type="ECO:0000305" key="61">
    <source>
    </source>
</evidence>
<evidence type="ECO:0007744" key="62">
    <source>
    </source>
</evidence>
<evidence type="ECO:0007829" key="63">
    <source>
        <dbReference type="PDB" id="1T45"/>
    </source>
</evidence>
<evidence type="ECO:0007829" key="64">
    <source>
        <dbReference type="PDB" id="1T46"/>
    </source>
</evidence>
<evidence type="ECO:0007829" key="65">
    <source>
        <dbReference type="PDB" id="2EC8"/>
    </source>
</evidence>
<evidence type="ECO:0007829" key="66">
    <source>
        <dbReference type="PDB" id="2IUH"/>
    </source>
</evidence>
<evidence type="ECO:0007829" key="67">
    <source>
        <dbReference type="PDB" id="3G0E"/>
    </source>
</evidence>
<evidence type="ECO:0007829" key="68">
    <source>
        <dbReference type="PDB" id="3G0F"/>
    </source>
</evidence>
<evidence type="ECO:0007829" key="69">
    <source>
        <dbReference type="PDB" id="4HVS"/>
    </source>
</evidence>
<evidence type="ECO:0007829" key="70">
    <source>
        <dbReference type="PDB" id="4K94"/>
    </source>
</evidence>
<evidence type="ECO:0007829" key="71">
    <source>
        <dbReference type="PDB" id="4PGZ"/>
    </source>
</evidence>
<evidence type="ECO:0007829" key="72">
    <source>
        <dbReference type="PDB" id="6HH1"/>
    </source>
</evidence>
<evidence type="ECO:0007829" key="73">
    <source>
        <dbReference type="PDB" id="6ITT"/>
    </source>
</evidence>
<evidence type="ECO:0007829" key="74">
    <source>
        <dbReference type="PDB" id="7KHG"/>
    </source>
</evidence>
<evidence type="ECO:0007829" key="75">
    <source>
        <dbReference type="PDB" id="7KHK"/>
    </source>
</evidence>
<evidence type="ECO:0007829" key="76">
    <source>
        <dbReference type="PDB" id="8DFP"/>
    </source>
</evidence>
<evidence type="ECO:0007829" key="77">
    <source>
        <dbReference type="PDB" id="8PQD"/>
    </source>
</evidence>